<sequence>MIIRSPEPEVKIVVDRDPVKTSFEEWARPGHFSRTLAKGPDTTTWIWNLHADAHDFDSHTGDLEEISRKVFSAHFGQLSIIFLWLSGMYFHGARFSNYEAWLSDPTHIGPSAQVVWPIVGQEILNGDVGGGFRGIQITSGFFQLWRASGITSELQLYCTAIGALIFAALMLFAGWFHYHKAAPKLAWFQDVESMLNHHLAGLLGLGSLSWAGHQIHVSLPINQFLDAGVDPKEIPLPHEFILNRDLLAQLYPSFAEGATPFFTLNWSKYAEFLTFRGGLDPVTGGLWLTDIAHHHLAIAILFLIAGHMYRTNWGIGHGLKDILEAHKGPFTGQGHKGLYEILTTSWHAQLSLNLAMLGSTTIVVAHHMYSMPPYPYLATDYGTQLSLFTHHMWIGGFLIVGAAAHAAIFMVRDYDPTTRYNDLLDRVLRHRDAIISHLNWVCIFLGFHSFGLYIHNDTMSALGRPQDMFSDTAIQLQPIFAQWVQNIHATAPGVTAPGATTSTSLTWGGGELVAVGGKVALLPIPLGTADFLVHHIHAFTIHVTVLILLKGVLFARSSRLIPDKANLGFRFPCDGPGRGGTCQVSAWDHVFLGLFWMYNAISVVIFHFSWKMQSDVWGTISDQGVVTHITGGNFAQSSITINGWLRDFLWAQASQVIQSYGSSLSAYGLFFLGAHFVWAFSLMFLFSGRGYWQELIESIVWAHNKLKVAPATQPRALSIIQGRAVGVTHYLLGGIATTWAFFLARIIAVG</sequence>
<name>PSAA_WHEAT</name>
<accession>P58311</accession>
<reference key="1">
    <citation type="journal article" date="2000" name="Plant Mol. Biol. Rep.">
        <title>Chinese spring wheat (Triticum aestivum L.) chloroplast genome: complete sequence and contig clones.</title>
        <authorList>
            <person name="Ogihara Y."/>
            <person name="Isono K."/>
            <person name="Kojima T."/>
            <person name="Endo A."/>
            <person name="Hanaoka M."/>
            <person name="Shiina T."/>
            <person name="Terachi T."/>
            <person name="Utsugi S."/>
            <person name="Murata M."/>
            <person name="Mori N."/>
            <person name="Takumi S."/>
            <person name="Ikeo K."/>
            <person name="Gojobori T."/>
            <person name="Murai R."/>
            <person name="Murai K."/>
            <person name="Matsuoka Y."/>
            <person name="Ohnishi Y."/>
            <person name="Tajiri H."/>
            <person name="Tsunewaki K."/>
        </authorList>
    </citation>
    <scope>NUCLEOTIDE SEQUENCE [LARGE SCALE GENOMIC DNA]</scope>
    <source>
        <strain>cv. Chinese Spring</strain>
    </source>
</reference>
<comment type="function">
    <text>PsaA and PsaB bind P700, the primary electron donor of photosystem I (PSI), as well as the electron acceptors A0, A1 and FX. PSI is a plastocyanin-ferredoxin oxidoreductase, converting photonic excitation into a charge separation, which transfers an electron from the donor P700 chlorophyll pair to the spectroscopically characterized acceptors A0, A1, FX, FA and FB in turn. Oxidized P700 is reduced on the lumenal side of the thylakoid membrane by plastocyanin.</text>
</comment>
<comment type="catalytic activity">
    <reaction evidence="1">
        <text>reduced [plastocyanin] + hnu + oxidized [2Fe-2S]-[ferredoxin] = oxidized [plastocyanin] + reduced [2Fe-2S]-[ferredoxin]</text>
        <dbReference type="Rhea" id="RHEA:30407"/>
        <dbReference type="Rhea" id="RHEA-COMP:10000"/>
        <dbReference type="Rhea" id="RHEA-COMP:10001"/>
        <dbReference type="Rhea" id="RHEA-COMP:10039"/>
        <dbReference type="Rhea" id="RHEA-COMP:10040"/>
        <dbReference type="ChEBI" id="CHEBI:29036"/>
        <dbReference type="ChEBI" id="CHEBI:30212"/>
        <dbReference type="ChEBI" id="CHEBI:33737"/>
        <dbReference type="ChEBI" id="CHEBI:33738"/>
        <dbReference type="ChEBI" id="CHEBI:49552"/>
        <dbReference type="EC" id="1.97.1.12"/>
    </reaction>
</comment>
<comment type="cofactor">
    <text evidence="1">P700 is a chlorophyll a/chlorophyll a' dimer, A0 is one or more chlorophyll a, A1 is one or both phylloquinones and FX is a shared 4Fe-4S iron-sulfur center.</text>
</comment>
<comment type="subunit">
    <text evidence="1">The PsaA/B heterodimer binds the P700 chlorophyll special pair and subsequent electron acceptors. PSI consists of a core antenna complex that captures photons, and an electron transfer chain that converts photonic excitation into a charge separation. The eukaryotic PSI reaction center is composed of at least 11 subunits.</text>
</comment>
<comment type="subcellular location">
    <subcellularLocation>
        <location evidence="1">Plastid</location>
        <location evidence="1">Chloroplast thylakoid membrane</location>
        <topology evidence="1">Multi-pass membrane protein</topology>
    </subcellularLocation>
</comment>
<comment type="similarity">
    <text evidence="1">Belongs to the PsaA/PsaB family.</text>
</comment>
<proteinExistence type="inferred from homology"/>
<protein>
    <recommendedName>
        <fullName evidence="1">Photosystem I P700 chlorophyll a apoprotein A1</fullName>
        <ecNumber evidence="1">1.97.1.12</ecNumber>
    </recommendedName>
    <alternativeName>
        <fullName evidence="1">PSI-A</fullName>
    </alternativeName>
    <alternativeName>
        <fullName evidence="1">PsaA</fullName>
    </alternativeName>
</protein>
<gene>
    <name evidence="1" type="primary">psaA</name>
</gene>
<organism>
    <name type="scientific">Triticum aestivum</name>
    <name type="common">Wheat</name>
    <dbReference type="NCBI Taxonomy" id="4565"/>
    <lineage>
        <taxon>Eukaryota</taxon>
        <taxon>Viridiplantae</taxon>
        <taxon>Streptophyta</taxon>
        <taxon>Embryophyta</taxon>
        <taxon>Tracheophyta</taxon>
        <taxon>Spermatophyta</taxon>
        <taxon>Magnoliopsida</taxon>
        <taxon>Liliopsida</taxon>
        <taxon>Poales</taxon>
        <taxon>Poaceae</taxon>
        <taxon>BOP clade</taxon>
        <taxon>Pooideae</taxon>
        <taxon>Triticodae</taxon>
        <taxon>Triticeae</taxon>
        <taxon>Triticinae</taxon>
        <taxon>Triticum</taxon>
    </lineage>
</organism>
<geneLocation type="chloroplast"/>
<feature type="chain" id="PRO_0000088582" description="Photosystem I P700 chlorophyll a apoprotein A1">
    <location>
        <begin position="1"/>
        <end position="750"/>
    </location>
</feature>
<feature type="transmembrane region" description="Helical; Name=I" evidence="1">
    <location>
        <begin position="70"/>
        <end position="93"/>
    </location>
</feature>
<feature type="transmembrane region" description="Helical; Name=II" evidence="1">
    <location>
        <begin position="156"/>
        <end position="179"/>
    </location>
</feature>
<feature type="transmembrane region" description="Helical; Name=III" evidence="1">
    <location>
        <begin position="195"/>
        <end position="219"/>
    </location>
</feature>
<feature type="transmembrane region" description="Helical; Name=IV" evidence="1">
    <location>
        <begin position="291"/>
        <end position="309"/>
    </location>
</feature>
<feature type="transmembrane region" description="Helical; Name=V" evidence="1">
    <location>
        <begin position="346"/>
        <end position="369"/>
    </location>
</feature>
<feature type="transmembrane region" description="Helical; Name=VI" evidence="1">
    <location>
        <begin position="385"/>
        <end position="411"/>
    </location>
</feature>
<feature type="transmembrane region" description="Helical; Name=VII" evidence="1">
    <location>
        <begin position="433"/>
        <end position="455"/>
    </location>
</feature>
<feature type="transmembrane region" description="Helical; Name=VIII" evidence="1">
    <location>
        <begin position="531"/>
        <end position="549"/>
    </location>
</feature>
<feature type="transmembrane region" description="Helical; Name=IX" evidence="1">
    <location>
        <begin position="589"/>
        <end position="610"/>
    </location>
</feature>
<feature type="transmembrane region" description="Helical; Name=X" evidence="1">
    <location>
        <begin position="664"/>
        <end position="686"/>
    </location>
</feature>
<feature type="transmembrane region" description="Helical; Name=XI" evidence="1">
    <location>
        <begin position="724"/>
        <end position="744"/>
    </location>
</feature>
<feature type="binding site" evidence="1">
    <location>
        <position position="573"/>
    </location>
    <ligand>
        <name>[4Fe-4S] cluster</name>
        <dbReference type="ChEBI" id="CHEBI:49883"/>
        <note>ligand shared between dimeric partners</note>
    </ligand>
</feature>
<feature type="binding site" evidence="1">
    <location>
        <position position="582"/>
    </location>
    <ligand>
        <name>[4Fe-4S] cluster</name>
        <dbReference type="ChEBI" id="CHEBI:49883"/>
        <note>ligand shared between dimeric partners</note>
    </ligand>
</feature>
<feature type="binding site" description="axial binding residue" evidence="1">
    <location>
        <position position="675"/>
    </location>
    <ligand>
        <name>chlorophyll a'</name>
        <dbReference type="ChEBI" id="CHEBI:189419"/>
        <label>A1</label>
    </ligand>
    <ligandPart>
        <name>Mg</name>
        <dbReference type="ChEBI" id="CHEBI:25107"/>
    </ligandPart>
</feature>
<feature type="binding site" description="axial binding residue" evidence="1">
    <location>
        <position position="683"/>
    </location>
    <ligand>
        <name>chlorophyll a</name>
        <dbReference type="ChEBI" id="CHEBI:58416"/>
        <label>A3</label>
    </ligand>
    <ligandPart>
        <name>Mg</name>
        <dbReference type="ChEBI" id="CHEBI:25107"/>
    </ligandPart>
</feature>
<feature type="binding site" evidence="1">
    <location>
        <position position="691"/>
    </location>
    <ligand>
        <name>chlorophyll a</name>
        <dbReference type="ChEBI" id="CHEBI:58416"/>
        <label>A3</label>
    </ligand>
</feature>
<feature type="binding site" evidence="1">
    <location>
        <position position="692"/>
    </location>
    <ligand>
        <name>phylloquinone</name>
        <dbReference type="ChEBI" id="CHEBI:18067"/>
        <label>A</label>
    </ligand>
</feature>
<keyword id="KW-0004">4Fe-4S</keyword>
<keyword id="KW-0148">Chlorophyll</keyword>
<keyword id="KW-0150">Chloroplast</keyword>
<keyword id="KW-0157">Chromophore</keyword>
<keyword id="KW-0249">Electron transport</keyword>
<keyword id="KW-0408">Iron</keyword>
<keyword id="KW-0411">Iron-sulfur</keyword>
<keyword id="KW-0460">Magnesium</keyword>
<keyword id="KW-0472">Membrane</keyword>
<keyword id="KW-0479">Metal-binding</keyword>
<keyword id="KW-0560">Oxidoreductase</keyword>
<keyword id="KW-0602">Photosynthesis</keyword>
<keyword id="KW-0603">Photosystem I</keyword>
<keyword id="KW-0934">Plastid</keyword>
<keyword id="KW-1185">Reference proteome</keyword>
<keyword id="KW-0793">Thylakoid</keyword>
<keyword id="KW-0812">Transmembrane</keyword>
<keyword id="KW-1133">Transmembrane helix</keyword>
<keyword id="KW-0813">Transport</keyword>
<evidence type="ECO:0000255" key="1">
    <source>
        <dbReference type="HAMAP-Rule" id="MF_00458"/>
    </source>
</evidence>
<dbReference type="EC" id="1.97.1.12" evidence="1"/>
<dbReference type="EMBL" id="AB042240">
    <property type="protein sequence ID" value="BAB47034.1"/>
    <property type="molecule type" value="Genomic_DNA"/>
</dbReference>
<dbReference type="RefSeq" id="NP_114259.1">
    <property type="nucleotide sequence ID" value="NC_002762.1"/>
</dbReference>
<dbReference type="SMR" id="P58311"/>
<dbReference type="STRING" id="4565.P58311"/>
<dbReference type="PaxDb" id="4565-EPlTAEP00000010026"/>
<dbReference type="EnsemblPlants" id="TraesKAR6B01G0219560.1">
    <property type="protein sequence ID" value="cds.TraesKAR6B01G0219560.1"/>
    <property type="gene ID" value="TraesKAR6B01G0219560"/>
</dbReference>
<dbReference type="EnsemblPlants" id="TraesKAR6B01G0220310.1">
    <property type="protein sequence ID" value="cds.TraesKAR6B01G0220310.1"/>
    <property type="gene ID" value="TraesKAR6B01G0220310"/>
</dbReference>
<dbReference type="EnsemblPlants" id="TraesKARUn01G0030380.1">
    <property type="protein sequence ID" value="cds.TraesKARUn01G0030380.1"/>
    <property type="gene ID" value="TraesKARUn01G0030380"/>
</dbReference>
<dbReference type="EnsemblPlants" id="TraesKARUn01G0030440.1">
    <property type="protein sequence ID" value="cds.TraesKARUn01G0030440.1"/>
    <property type="gene ID" value="TraesKARUn01G0030440"/>
</dbReference>
<dbReference type="EnsemblPlants" id="TraesKARUn01G0030830.1">
    <property type="protein sequence ID" value="cds.TraesKARUn01G0030830.1"/>
    <property type="gene ID" value="TraesKARUn01G0030830"/>
</dbReference>
<dbReference type="EnsemblPlants" id="TraesKARUn01G0031370.1">
    <property type="protein sequence ID" value="cds.TraesKARUn01G0031370.1"/>
    <property type="gene ID" value="TraesKARUn01G0031370"/>
</dbReference>
<dbReference type="EnsemblPlants" id="TraesKARUn01G0034460.1">
    <property type="protein sequence ID" value="cds.TraesKARUn01G0034460.1"/>
    <property type="gene ID" value="TraesKARUn01G0034460"/>
</dbReference>
<dbReference type="EnsemblPlants" id="TraesKARUn01G0036310.1">
    <property type="protein sequence ID" value="cds.TraesKARUn01G0036310.1"/>
    <property type="gene ID" value="TraesKARUn01G0036310"/>
</dbReference>
<dbReference type="EnsemblPlants" id="TraesKARUn01G0061440.1">
    <property type="protein sequence ID" value="cds.TraesKARUn01G0061440.1"/>
    <property type="gene ID" value="TraesKARUn01G0061440"/>
</dbReference>
<dbReference type="EnsemblPlants" id="TraesKARUn01G0066550.1">
    <property type="protein sequence ID" value="cds.TraesKARUn01G0066550.1"/>
    <property type="gene ID" value="TraesKARUn01G0066550"/>
</dbReference>
<dbReference type="EnsemblPlants" id="TraesKARUn01G0066770.1">
    <property type="protein sequence ID" value="cds.TraesKARUn01G0066770.1"/>
    <property type="gene ID" value="TraesKARUn01G0066770"/>
</dbReference>
<dbReference type="EnsemblPlants" id="TraesKARUn01G0068090.1">
    <property type="protein sequence ID" value="cds.TraesKARUn01G0068090.1"/>
    <property type="gene ID" value="TraesKARUn01G0068090"/>
</dbReference>
<dbReference type="EnsemblPlants" id="TraesKARUn01G0068550.1">
    <property type="protein sequence ID" value="cds.TraesKARUn01G0068550.1"/>
    <property type="gene ID" value="TraesKARUn01G0068550"/>
</dbReference>
<dbReference type="EnsemblPlants" id="TraesKARUn01G0069370.1">
    <property type="protein sequence ID" value="cds.TraesKARUn01G0069370.1"/>
    <property type="gene ID" value="TraesKARUn01G0069370"/>
</dbReference>
<dbReference type="EnsemblPlants" id="TraesKARUn01G0070730.1">
    <property type="protein sequence ID" value="cds.TraesKARUn01G0070730.1"/>
    <property type="gene ID" value="TraesKARUn01G0070730"/>
</dbReference>
<dbReference type="EnsemblPlants" id="TraesKARUn01G0071580.1">
    <property type="protein sequence ID" value="cds.TraesKARUn01G0071580.1"/>
    <property type="gene ID" value="TraesKARUn01G0071580"/>
</dbReference>
<dbReference type="EnsemblPlants" id="TraesKARUn01G0072090.1">
    <property type="protein sequence ID" value="cds.TraesKARUn01G0072090.1"/>
    <property type="gene ID" value="TraesKARUn01G0072090"/>
</dbReference>
<dbReference type="EnsemblPlants" id="TraesKARUn01G0076080.1">
    <property type="protein sequence ID" value="cds.TraesKARUn01G0076080.1"/>
    <property type="gene ID" value="TraesKARUn01G0076080"/>
</dbReference>
<dbReference type="EnsemblPlants" id="TraesKARUn01G0077620.1">
    <property type="protein sequence ID" value="cds.TraesKARUn01G0077620.1"/>
    <property type="gene ID" value="TraesKARUn01G0077620"/>
</dbReference>
<dbReference type="EnsemblPlants" id="TraesKARUn01G0082050.1">
    <property type="protein sequence ID" value="cds.TraesKARUn01G0082050.1"/>
    <property type="gene ID" value="TraesKARUn01G0082050"/>
</dbReference>
<dbReference type="EnsemblPlants" id="TraesKARUn01G0084530.1">
    <property type="protein sequence ID" value="cds.TraesKARUn01G0084530.1"/>
    <property type="gene ID" value="TraesKARUn01G0084530"/>
</dbReference>
<dbReference type="EnsemblPlants" id="TraesKARUn01G0086090.1">
    <property type="protein sequence ID" value="cds.TraesKARUn01G0086090.1"/>
    <property type="gene ID" value="TraesKARUn01G0086090"/>
</dbReference>
<dbReference type="EnsemblPlants" id="TraesKARUn01G0086940.1">
    <property type="protein sequence ID" value="cds.TraesKARUn01G0086940.1"/>
    <property type="gene ID" value="TraesKARUn01G0086940"/>
</dbReference>
<dbReference type="EnsemblPlants" id="TraesKARUn01G0087610.1">
    <property type="protein sequence ID" value="cds.TraesKARUn01G0087610.1"/>
    <property type="gene ID" value="TraesKARUn01G0087610"/>
</dbReference>
<dbReference type="EnsemblPlants" id="TraesKARUn01G0088700.1">
    <property type="protein sequence ID" value="cds.TraesKARUn01G0088700.1"/>
    <property type="gene ID" value="TraesKARUn01G0088700"/>
</dbReference>
<dbReference type="EnsemblPlants" id="TraesKARUn01G0089840.1">
    <property type="protein sequence ID" value="cds.TraesKARUn01G0089840.1"/>
    <property type="gene ID" value="TraesKARUn01G0089840"/>
</dbReference>
<dbReference type="EnsemblPlants" id="TraesKARUn01G0090370.1">
    <property type="protein sequence ID" value="cds.TraesKARUn01G0090370.1"/>
    <property type="gene ID" value="TraesKARUn01G0090370"/>
</dbReference>
<dbReference type="EnsemblPlants" id="TraesKARUn01G0091000.1">
    <property type="protein sequence ID" value="cds.TraesKARUn01G0091000.1"/>
    <property type="gene ID" value="TraesKARUn01G0091000"/>
</dbReference>
<dbReference type="EnsemblPlants" id="TraesKARUn01G0092390.1">
    <property type="protein sequence ID" value="cds.TraesKARUn01G0092390.1"/>
    <property type="gene ID" value="TraesKARUn01G0092390"/>
</dbReference>
<dbReference type="EnsemblPlants" id="TraesKARUn01G0094740.1">
    <property type="protein sequence ID" value="cds.TraesKARUn01G0094740.1"/>
    <property type="gene ID" value="TraesKARUn01G0094740"/>
</dbReference>
<dbReference type="EnsemblPlants" id="TraesKARUn01G0095660.1">
    <property type="protein sequence ID" value="cds.TraesKARUn01G0095660.1"/>
    <property type="gene ID" value="TraesKARUn01G0095660"/>
</dbReference>
<dbReference type="EnsemblPlants" id="TraesKARUn01G0095830.1">
    <property type="protein sequence ID" value="cds.TraesKARUn01G0095830.1"/>
    <property type="gene ID" value="TraesKARUn01G0095830"/>
</dbReference>
<dbReference type="EnsemblPlants" id="TraesKARUn01G0095970.1">
    <property type="protein sequence ID" value="cds.TraesKARUn01G0095970.1"/>
    <property type="gene ID" value="TraesKARUn01G0095970"/>
</dbReference>
<dbReference type="EnsemblPlants" id="TraesKARUn01G0096170.1">
    <property type="protein sequence ID" value="cds.TraesKARUn01G0096170.1"/>
    <property type="gene ID" value="TraesKARUn01G0096170"/>
</dbReference>
<dbReference type="EnsemblPlants" id="TraesKARUn01G0096510.1">
    <property type="protein sequence ID" value="cds.TraesKARUn01G0096510.1"/>
    <property type="gene ID" value="TraesKARUn01G0096510"/>
</dbReference>
<dbReference type="EnsemblPlants" id="TraesKARUn01G0096580.1">
    <property type="protein sequence ID" value="cds.TraesKARUn01G0096580.1"/>
    <property type="gene ID" value="TraesKARUn01G0096580"/>
</dbReference>
<dbReference type="EnsemblPlants" id="TraesKARUn01G0097010.1">
    <property type="protein sequence ID" value="cds.TraesKARUn01G0097010.1"/>
    <property type="gene ID" value="TraesKARUn01G0097010"/>
</dbReference>
<dbReference type="EnsemblPlants" id="TraesKARUn01G0097520.1">
    <property type="protein sequence ID" value="cds.TraesKARUn01G0097520.1"/>
    <property type="gene ID" value="TraesKARUn01G0097520"/>
</dbReference>
<dbReference type="EnsemblPlants" id="TraesKARUn01G0097700.1">
    <property type="protein sequence ID" value="cds.TraesKARUn01G0097700.1"/>
    <property type="gene ID" value="TraesKARUn01G0097700"/>
</dbReference>
<dbReference type="EnsemblPlants" id="TraesKARUn01G0097970.1">
    <property type="protein sequence ID" value="cds.TraesKARUn01G0097970.1"/>
    <property type="gene ID" value="TraesKARUn01G0097970"/>
</dbReference>
<dbReference type="EnsemblPlants" id="TraesKARUn01G0098070.1">
    <property type="protein sequence ID" value="cds.TraesKARUn01G0098070.1"/>
    <property type="gene ID" value="TraesKARUn01G0098070"/>
</dbReference>
<dbReference type="EnsemblPlants" id="TraesKARUn01G0099320.1">
    <property type="protein sequence ID" value="cds.TraesKARUn01G0099320.1"/>
    <property type="gene ID" value="TraesKARUn01G0099320"/>
</dbReference>
<dbReference type="EnsemblPlants" id="TraesKARUn01G0099940.1">
    <property type="protein sequence ID" value="cds.TraesKARUn01G0099940.1"/>
    <property type="gene ID" value="TraesKARUn01G0099940"/>
</dbReference>
<dbReference type="EnsemblPlants" id="TraesKARUn01G0100060.1">
    <property type="protein sequence ID" value="cds.TraesKARUn01G0100060.1"/>
    <property type="gene ID" value="TraesKARUn01G0100060"/>
</dbReference>
<dbReference type="EnsemblPlants" id="TraesKARUn01G0100590.1">
    <property type="protein sequence ID" value="cds.TraesKARUn01G0100590.1"/>
    <property type="gene ID" value="TraesKARUn01G0100590"/>
</dbReference>
<dbReference type="EnsemblPlants" id="TraesKARUn01G0102170.1">
    <property type="protein sequence ID" value="cds.TraesKARUn01G0102170.1"/>
    <property type="gene ID" value="TraesKARUn01G0102170"/>
</dbReference>
<dbReference type="EnsemblPlants" id="TraesKARUn01G0102360.1">
    <property type="protein sequence ID" value="cds.TraesKARUn01G0102360.1"/>
    <property type="gene ID" value="TraesKARUn01G0102360"/>
</dbReference>
<dbReference type="EnsemblPlants" id="TraesKARUn01G0102860.1">
    <property type="protein sequence ID" value="cds.TraesKARUn01G0102860.1"/>
    <property type="gene ID" value="TraesKARUn01G0102860"/>
</dbReference>
<dbReference type="EnsemblPlants" id="TraesKARUn01G0103900.1">
    <property type="protein sequence ID" value="cds.TraesKARUn01G0103900.1"/>
    <property type="gene ID" value="TraesKARUn01G0103900"/>
</dbReference>
<dbReference type="EnsemblPlants" id="TraesKARUn01G0104180.1">
    <property type="protein sequence ID" value="cds.TraesKARUn01G0104180.1"/>
    <property type="gene ID" value="TraesKARUn01G0104180"/>
</dbReference>
<dbReference type="EnsemblPlants" id="TraesKARUn01G0104320.1">
    <property type="protein sequence ID" value="cds.TraesKARUn01G0104320.1"/>
    <property type="gene ID" value="TraesKARUn01G0104320"/>
</dbReference>
<dbReference type="EnsemblPlants" id="TraesKARUn01G0104850.1">
    <property type="protein sequence ID" value="cds.TraesKARUn01G0104850.1"/>
    <property type="gene ID" value="TraesKARUn01G0104850"/>
</dbReference>
<dbReference type="EnsemblPlants" id="TraesKARUn01G0104930.1">
    <property type="protein sequence ID" value="cds.TraesKARUn01G0104930.1"/>
    <property type="gene ID" value="TraesKARUn01G0104930"/>
</dbReference>
<dbReference type="EnsemblPlants" id="TraesKARUn01G0106890.1">
    <property type="protein sequence ID" value="cds.TraesKARUn01G0106890.1"/>
    <property type="gene ID" value="TraesKARUn01G0106890"/>
</dbReference>
<dbReference type="EnsemblPlants" id="TraesKARUn01G0107270.1">
    <property type="protein sequence ID" value="cds.TraesKARUn01G0107270.1"/>
    <property type="gene ID" value="TraesKARUn01G0107270"/>
</dbReference>
<dbReference type="EnsemblPlants" id="TraesKARUn01G0107980.1">
    <property type="protein sequence ID" value="cds.TraesKARUn01G0107980.1"/>
    <property type="gene ID" value="TraesKARUn01G0107980"/>
</dbReference>
<dbReference type="EnsemblPlants" id="TraesKARUn01G0110150.1">
    <property type="protein sequence ID" value="cds.TraesKARUn01G0110150.1"/>
    <property type="gene ID" value="TraesKARUn01G0110150"/>
</dbReference>
<dbReference type="EnsemblPlants" id="TraesKARUn01G0111940.1">
    <property type="protein sequence ID" value="cds.TraesKARUn01G0111940.1"/>
    <property type="gene ID" value="TraesKARUn01G0111940"/>
</dbReference>
<dbReference type="EnsemblPlants" id="TraesKARUn01G0112000.1">
    <property type="protein sequence ID" value="cds.TraesKARUn01G0112000.1"/>
    <property type="gene ID" value="TraesKARUn01G0112000"/>
</dbReference>
<dbReference type="EnsemblPlants" id="TraesKARUn01G0112330.1">
    <property type="protein sequence ID" value="cds.TraesKARUn01G0112330.1"/>
    <property type="gene ID" value="TraesKARUn01G0112330"/>
</dbReference>
<dbReference type="EnsemblPlants" id="TraesKARUn01G0112910.1">
    <property type="protein sequence ID" value="cds.TraesKARUn01G0112910.1"/>
    <property type="gene ID" value="TraesKARUn01G0112910"/>
</dbReference>
<dbReference type="EnsemblPlants" id="TraesKARUn01G0114360.1">
    <property type="protein sequence ID" value="cds.TraesKARUn01G0114360.1"/>
    <property type="gene ID" value="TraesKARUn01G0114360"/>
</dbReference>
<dbReference type="EnsemblPlants" id="TraesKARUn01G0115010.1">
    <property type="protein sequence ID" value="cds.TraesKARUn01G0115010.1"/>
    <property type="gene ID" value="TraesKARUn01G0115010"/>
</dbReference>
<dbReference type="EnsemblPlants" id="TraesKARUn01G0115370.1">
    <property type="protein sequence ID" value="cds.TraesKARUn01G0115370.1"/>
    <property type="gene ID" value="TraesKARUn01G0115370"/>
</dbReference>
<dbReference type="EnsemblPlants" id="TraesKARUn01G0116120.1">
    <property type="protein sequence ID" value="cds.TraesKARUn01G0116120.1"/>
    <property type="gene ID" value="TraesKARUn01G0116120"/>
</dbReference>
<dbReference type="EnsemblPlants" id="TraesKARUn01G0116350.1">
    <property type="protein sequence ID" value="cds.TraesKARUn01G0116350.1"/>
    <property type="gene ID" value="TraesKARUn01G0116350"/>
</dbReference>
<dbReference type="EnsemblPlants" id="TraesKARUn01G0118420.1">
    <property type="protein sequence ID" value="cds.TraesKARUn01G0118420.1"/>
    <property type="gene ID" value="TraesKARUn01G0118420"/>
</dbReference>
<dbReference type="EnsemblPlants" id="TraesKARUn01G0118530.1">
    <property type="protein sequence ID" value="cds.TraesKARUn01G0118530.1"/>
    <property type="gene ID" value="TraesKARUn01G0118530"/>
</dbReference>
<dbReference type="EnsemblPlants" id="TraesKARUn01G0119010.1">
    <property type="protein sequence ID" value="cds.TraesKARUn01G0119010.1"/>
    <property type="gene ID" value="TraesKARUn01G0119010"/>
</dbReference>
<dbReference type="EnsemblPlants" id="TraesKARUn01G0120270.1">
    <property type="protein sequence ID" value="cds.TraesKARUn01G0120270.1"/>
    <property type="gene ID" value="TraesKARUn01G0120270"/>
</dbReference>
<dbReference type="EnsemblPlants" id="TraesKARUn01G0120390.1">
    <property type="protein sequence ID" value="cds.TraesKARUn01G0120390.1"/>
    <property type="gene ID" value="TraesKARUn01G0120390"/>
</dbReference>
<dbReference type="EnsemblPlants" id="TraesKARUn01G0121860.1">
    <property type="protein sequence ID" value="cds.TraesKARUn01G0121860.1"/>
    <property type="gene ID" value="TraesKARUn01G0121860"/>
</dbReference>
<dbReference type="EnsemblPlants" id="TraesKARUn01G0122120.1">
    <property type="protein sequence ID" value="cds.TraesKARUn01G0122120.1"/>
    <property type="gene ID" value="TraesKARUn01G0122120"/>
</dbReference>
<dbReference type="EnsemblPlants" id="TraesKARUn01G0122370.1">
    <property type="protein sequence ID" value="cds.TraesKARUn01G0122370.1"/>
    <property type="gene ID" value="TraesKARUn01G0122370"/>
</dbReference>
<dbReference type="EnsemblPlants" id="TraesKARUn01G0123750.1">
    <property type="protein sequence ID" value="cds.TraesKARUn01G0123750.1"/>
    <property type="gene ID" value="TraesKARUn01G0123750"/>
</dbReference>
<dbReference type="EnsemblPlants" id="TraesKARUn01G0124220.1">
    <property type="protein sequence ID" value="cds.TraesKARUn01G0124220.1"/>
    <property type="gene ID" value="TraesKARUn01G0124220"/>
</dbReference>
<dbReference type="EnsemblPlants" id="TraesKARUn01G0124620.1">
    <property type="protein sequence ID" value="cds.TraesKARUn01G0124620.1"/>
    <property type="gene ID" value="TraesKARUn01G0124620"/>
</dbReference>
<dbReference type="EnsemblPlants" id="TraesKARUn01G0125170.1">
    <property type="protein sequence ID" value="cds.TraesKARUn01G0125170.1"/>
    <property type="gene ID" value="TraesKARUn01G0125170"/>
</dbReference>
<dbReference type="EnsemblPlants" id="TraesKARUn01G0126050.1">
    <property type="protein sequence ID" value="cds.TraesKARUn01G0126050.1"/>
    <property type="gene ID" value="TraesKARUn01G0126050"/>
</dbReference>
<dbReference type="EnsemblPlants" id="TraesKARUn01G0128120.1">
    <property type="protein sequence ID" value="cds.TraesKARUn01G0128120.1"/>
    <property type="gene ID" value="TraesKARUn01G0128120"/>
</dbReference>
<dbReference type="EnsemblPlants" id="TraesKARUn01G0128740.1">
    <property type="protein sequence ID" value="cds.TraesKARUn01G0128740.1"/>
    <property type="gene ID" value="TraesKARUn01G0128740"/>
</dbReference>
<dbReference type="EnsemblPlants" id="TraesKARUn01G0128990.1">
    <property type="protein sequence ID" value="cds.TraesKARUn01G0128990.1"/>
    <property type="gene ID" value="TraesKARUn01G0128990"/>
</dbReference>
<dbReference type="EnsemblPlants" id="TraesKARUn01G0129740.1">
    <property type="protein sequence ID" value="cds.TraesKARUn01G0129740.1"/>
    <property type="gene ID" value="TraesKARUn01G0129740"/>
</dbReference>
<dbReference type="EnsemblPlants" id="TraesKARUn01G0130040.1">
    <property type="protein sequence ID" value="cds.TraesKARUn01G0130040.1"/>
    <property type="gene ID" value="TraesKARUn01G0130040"/>
</dbReference>
<dbReference type="EnsemblPlants" id="TraesKARUn01G0133040.1">
    <property type="protein sequence ID" value="cds.TraesKARUn01G0133040.1"/>
    <property type="gene ID" value="TraesKARUn01G0133040"/>
</dbReference>
<dbReference type="EnsemblPlants" id="TraesKARUn01G0134250.1">
    <property type="protein sequence ID" value="cds.TraesKARUn01G0134250.1"/>
    <property type="gene ID" value="TraesKARUn01G0134250"/>
</dbReference>
<dbReference type="EnsemblPlants" id="TraesKARUn01G0134760.1">
    <property type="protein sequence ID" value="cds.TraesKARUn01G0134760.1"/>
    <property type="gene ID" value="TraesKARUn01G0134760"/>
</dbReference>
<dbReference type="EnsemblPlants" id="TraesKARUn01G0134880.1">
    <property type="protein sequence ID" value="cds.TraesKARUn01G0134880.1"/>
    <property type="gene ID" value="TraesKARUn01G0134880"/>
</dbReference>
<dbReference type="EnsemblPlants" id="TraesKARUn01G0135060.1">
    <property type="protein sequence ID" value="cds.TraesKARUn01G0135060.1"/>
    <property type="gene ID" value="TraesKARUn01G0135060"/>
</dbReference>
<dbReference type="EnsemblPlants" id="TraesKARUn01G0135710.1">
    <property type="protein sequence ID" value="cds.TraesKARUn01G0135710.1"/>
    <property type="gene ID" value="TraesKARUn01G0135710"/>
</dbReference>
<dbReference type="EnsemblPlants" id="TraesKARUn01G0136040.1">
    <property type="protein sequence ID" value="cds.TraesKARUn01G0136040.1"/>
    <property type="gene ID" value="TraesKARUn01G0136040"/>
</dbReference>
<dbReference type="EnsemblPlants" id="TraesKARUn01G0136670.1">
    <property type="protein sequence ID" value="cds.TraesKARUn01G0136670.1"/>
    <property type="gene ID" value="TraesKARUn01G0136670"/>
</dbReference>
<dbReference type="EnsemblPlants" id="TraesKARUn01G0138010.1">
    <property type="protein sequence ID" value="cds.TraesKARUn01G0138010.1"/>
    <property type="gene ID" value="TraesKARUn01G0138010"/>
</dbReference>
<dbReference type="EnsemblPlants" id="TraesKARUn01G0138180.1">
    <property type="protein sequence ID" value="cds.TraesKARUn01G0138180.1"/>
    <property type="gene ID" value="TraesKARUn01G0138180"/>
</dbReference>
<dbReference type="EnsemblPlants" id="TraesKARUn01G0139060.1">
    <property type="protein sequence ID" value="cds.TraesKARUn01G0139060.1"/>
    <property type="gene ID" value="TraesKARUn01G0139060"/>
</dbReference>
<dbReference type="EnsemblPlants" id="TraesKARUn01G0139300.1">
    <property type="protein sequence ID" value="cds.TraesKARUn01G0139300.1"/>
    <property type="gene ID" value="TraesKARUn01G0139300"/>
</dbReference>
<dbReference type="EnsemblPlants" id="TraesKARUn01G0141460.1">
    <property type="protein sequence ID" value="cds.TraesKARUn01G0141460.1"/>
    <property type="gene ID" value="TraesKARUn01G0141460"/>
</dbReference>
<dbReference type="EnsemblPlants" id="TraesKARUn01G0142400.1">
    <property type="protein sequence ID" value="cds.TraesKARUn01G0142400.1"/>
    <property type="gene ID" value="TraesKARUn01G0142400"/>
</dbReference>
<dbReference type="EnsemblPlants" id="TraesKARUn01G0142720.1">
    <property type="protein sequence ID" value="cds.TraesKARUn01G0142720.1"/>
    <property type="gene ID" value="TraesKARUn01G0142720"/>
</dbReference>
<dbReference type="EnsemblPlants" id="TraesKARUn01G0143170.1">
    <property type="protein sequence ID" value="cds.TraesKARUn01G0143170.1"/>
    <property type="gene ID" value="TraesKARUn01G0143170"/>
</dbReference>
<dbReference type="EnsemblPlants" id="TraesKARUn01G0143660.1">
    <property type="protein sequence ID" value="cds.TraesKARUn01G0143660.1"/>
    <property type="gene ID" value="TraesKARUn01G0143660"/>
</dbReference>
<dbReference type="EnsemblPlants" id="TraesKARUn01G0144980.1">
    <property type="protein sequence ID" value="cds.TraesKARUn01G0144980.1"/>
    <property type="gene ID" value="TraesKARUn01G0144980"/>
</dbReference>
<dbReference type="EnsemblPlants" id="TraesKARUn01G0145460.1">
    <property type="protein sequence ID" value="cds.TraesKARUn01G0145460.1"/>
    <property type="gene ID" value="TraesKARUn01G0145460"/>
</dbReference>
<dbReference type="EnsemblPlants" id="TraesKARUn01G0145650.1">
    <property type="protein sequence ID" value="cds.TraesKARUn01G0145650.1"/>
    <property type="gene ID" value="TraesKARUn01G0145650"/>
</dbReference>
<dbReference type="EnsemblPlants" id="TraesKARUn01G0145860.1">
    <property type="protein sequence ID" value="cds.TraesKARUn01G0145860.1"/>
    <property type="gene ID" value="TraesKARUn01G0145860"/>
</dbReference>
<dbReference type="EnsemblPlants" id="TraesKARUn01G0146050.1">
    <property type="protein sequence ID" value="cds.TraesKARUn01G0146050.1"/>
    <property type="gene ID" value="TraesKARUn01G0146050"/>
</dbReference>
<dbReference type="EnsemblPlants" id="TraesKARUn01G0146370.1">
    <property type="protein sequence ID" value="cds.TraesKARUn01G0146370.1"/>
    <property type="gene ID" value="TraesKARUn01G0146370"/>
</dbReference>
<dbReference type="EnsemblPlants" id="TraesKARUn01G0147150.1">
    <property type="protein sequence ID" value="cds.TraesKARUn01G0147150.1"/>
    <property type="gene ID" value="TraesKARUn01G0147150"/>
</dbReference>
<dbReference type="EnsemblPlants" id="TraesKARUn01G0147340.1">
    <property type="protein sequence ID" value="cds.TraesKARUn01G0147340.1"/>
    <property type="gene ID" value="TraesKARUn01G0147340"/>
</dbReference>
<dbReference type="EnsemblPlants" id="TraesKARUn01G0147710.1">
    <property type="protein sequence ID" value="cds.TraesKARUn01G0147710.1"/>
    <property type="gene ID" value="TraesKARUn01G0147710"/>
</dbReference>
<dbReference type="EnsemblPlants" id="TraesKARUn01G0148180.1">
    <property type="protein sequence ID" value="cds.TraesKARUn01G0148180.1"/>
    <property type="gene ID" value="TraesKARUn01G0148180"/>
</dbReference>
<dbReference type="EnsemblPlants" id="TraesKARUn01G0148280.1">
    <property type="protein sequence ID" value="cds.TraesKARUn01G0148280.1"/>
    <property type="gene ID" value="TraesKARUn01G0148280"/>
</dbReference>
<dbReference type="EnsemblPlants" id="TraesKARUn01G0148630.1">
    <property type="protein sequence ID" value="cds.TraesKARUn01G0148630.1"/>
    <property type="gene ID" value="TraesKARUn01G0148630"/>
</dbReference>
<dbReference type="EnsemblPlants" id="TraesKARUn01G0149690.1">
    <property type="protein sequence ID" value="cds.TraesKARUn01G0149690.1"/>
    <property type="gene ID" value="TraesKARUn01G0149690"/>
</dbReference>
<dbReference type="EnsemblPlants" id="TraesKARUn01G0150570.1">
    <property type="protein sequence ID" value="cds.TraesKARUn01G0150570.1"/>
    <property type="gene ID" value="TraesKARUn01G0150570"/>
</dbReference>
<dbReference type="EnsemblPlants" id="TraesKARUn01G0152980.1">
    <property type="protein sequence ID" value="cds.TraesKARUn01G0152980.1"/>
    <property type="gene ID" value="TraesKARUn01G0152980"/>
</dbReference>
<dbReference type="EnsemblPlants" id="TraesKARUn01G0153190.1">
    <property type="protein sequence ID" value="cds.TraesKARUn01G0153190.1"/>
    <property type="gene ID" value="TraesKARUn01G0153190"/>
</dbReference>
<dbReference type="EnsemblPlants" id="TraesKARUn01G0153620.1">
    <property type="protein sequence ID" value="cds.TraesKARUn01G0153620.1"/>
    <property type="gene ID" value="TraesKARUn01G0153620"/>
</dbReference>
<dbReference type="EnsemblPlants" id="TraesKARUn01G0154300.1">
    <property type="protein sequence ID" value="cds.TraesKARUn01G0154300.1"/>
    <property type="gene ID" value="TraesKARUn01G0154300"/>
</dbReference>
<dbReference type="EnsemblPlants" id="TraesKARUn01G0155240.1">
    <property type="protein sequence ID" value="cds.TraesKARUn01G0155240.1"/>
    <property type="gene ID" value="TraesKARUn01G0155240"/>
</dbReference>
<dbReference type="EnsemblPlants" id="TraesKARUn01G0155490.1">
    <property type="protein sequence ID" value="cds.TraesKARUn01G0155490.1"/>
    <property type="gene ID" value="TraesKARUn01G0155490"/>
</dbReference>
<dbReference type="EnsemblPlants" id="TraesKARUn01G0156390.1">
    <property type="protein sequence ID" value="cds.TraesKARUn01G0156390.1"/>
    <property type="gene ID" value="TraesKARUn01G0156390"/>
</dbReference>
<dbReference type="EnsemblPlants" id="TraesKARUn01G0156920.1">
    <property type="protein sequence ID" value="cds.TraesKARUn01G0156920.1"/>
    <property type="gene ID" value="TraesKARUn01G0156920"/>
</dbReference>
<dbReference type="EnsemblPlants" id="TraesKARUn01G0157280.1">
    <property type="protein sequence ID" value="cds.TraesKARUn01G0157280.1"/>
    <property type="gene ID" value="TraesKARUn01G0157280"/>
</dbReference>
<dbReference type="EnsemblPlants" id="TraesKARUn01G0158000.1">
    <property type="protein sequence ID" value="cds.TraesKARUn01G0158000.1"/>
    <property type="gene ID" value="TraesKARUn01G0158000"/>
</dbReference>
<dbReference type="EnsemblPlants" id="TraesKARUn01G0158870.1">
    <property type="protein sequence ID" value="cds.TraesKARUn01G0158870.1"/>
    <property type="gene ID" value="TraesKARUn01G0158870"/>
</dbReference>
<dbReference type="EnsemblPlants" id="TraesKARUn01G0159890.1">
    <property type="protein sequence ID" value="cds.TraesKARUn01G0159890.1"/>
    <property type="gene ID" value="TraesKARUn01G0159890"/>
</dbReference>
<dbReference type="EnsemblPlants" id="TraesKARUn01G0160470.1">
    <property type="protein sequence ID" value="cds.TraesKARUn01G0160470.1"/>
    <property type="gene ID" value="TraesKARUn01G0160470"/>
</dbReference>
<dbReference type="EnsemblPlants" id="TraesKARUn01G0162540.1">
    <property type="protein sequence ID" value="cds.TraesKARUn01G0162540.1"/>
    <property type="gene ID" value="TraesKARUn01G0162540"/>
</dbReference>
<dbReference type="EnsemblPlants" id="TraesKARUn01G0164080.1">
    <property type="protein sequence ID" value="cds.TraesKARUn01G0164080.1"/>
    <property type="gene ID" value="TraesKARUn01G0164080"/>
</dbReference>
<dbReference type="EnsemblPlants" id="TraesKARUn01G0164580.1">
    <property type="protein sequence ID" value="cds.TraesKARUn01G0164580.1"/>
    <property type="gene ID" value="TraesKARUn01G0164580"/>
</dbReference>
<dbReference type="EnsemblPlants" id="TraesKARUn01G0165690.1">
    <property type="protein sequence ID" value="cds.TraesKARUn01G0165690.1"/>
    <property type="gene ID" value="TraesKARUn01G0165690"/>
</dbReference>
<dbReference type="EnsemblPlants" id="TraesKARUn01G0165750.1">
    <property type="protein sequence ID" value="cds.TraesKARUn01G0165750.1"/>
    <property type="gene ID" value="TraesKARUn01G0165750"/>
</dbReference>
<dbReference type="EnsemblPlants" id="TraesKARUn01G0166390.1">
    <property type="protein sequence ID" value="cds.TraesKARUn01G0166390.1"/>
    <property type="gene ID" value="TraesKARUn01G0166390"/>
</dbReference>
<dbReference type="EnsemblPlants" id="TraesKARUn01G0166470.1">
    <property type="protein sequence ID" value="cds.TraesKARUn01G0166470.1"/>
    <property type="gene ID" value="TraesKARUn01G0166470"/>
</dbReference>
<dbReference type="EnsemblPlants" id="TraesKARUn01G0168060.1">
    <property type="protein sequence ID" value="cds.TraesKARUn01G0168060.1"/>
    <property type="gene ID" value="TraesKARUn01G0168060"/>
</dbReference>
<dbReference type="EnsemblPlants" id="TraesKARUn01G0168340.1">
    <property type="protein sequence ID" value="cds.TraesKARUn01G0168340.1"/>
    <property type="gene ID" value="TraesKARUn01G0168340"/>
</dbReference>
<dbReference type="EnsemblPlants" id="TraesKARUn01G0168360.1">
    <property type="protein sequence ID" value="cds.TraesKARUn01G0168360.1"/>
    <property type="gene ID" value="TraesKARUn01G0168360"/>
</dbReference>
<dbReference type="EnsemblPlants" id="TraesKARUn01G0168490.1">
    <property type="protein sequence ID" value="cds.TraesKARUn01G0168490.1"/>
    <property type="gene ID" value="TraesKARUn01G0168490"/>
</dbReference>
<dbReference type="EnsemblPlants" id="TraesKARUn01G0168810.1">
    <property type="protein sequence ID" value="cds.TraesKARUn01G0168810.1"/>
    <property type="gene ID" value="TraesKARUn01G0168810"/>
</dbReference>
<dbReference type="EnsemblPlants" id="TraesKARUn01G0169520.1">
    <property type="protein sequence ID" value="cds.TraesKARUn01G0169520.1"/>
    <property type="gene ID" value="TraesKARUn01G0169520"/>
</dbReference>
<dbReference type="EnsemblPlants" id="TraesKARUn01G0172810.1">
    <property type="protein sequence ID" value="cds.TraesKARUn01G0172810.1"/>
    <property type="gene ID" value="TraesKARUn01G0172810"/>
</dbReference>
<dbReference type="EnsemblPlants" id="TraesKARUn01G0173100.1">
    <property type="protein sequence ID" value="cds.TraesKARUn01G0173100.1"/>
    <property type="gene ID" value="TraesKARUn01G0173100"/>
</dbReference>
<dbReference type="EnsemblPlants" id="TraesKARUn01G0174210.1">
    <property type="protein sequence ID" value="cds.TraesKARUn01G0174210.1"/>
    <property type="gene ID" value="TraesKARUn01G0174210"/>
</dbReference>
<dbReference type="EnsemblPlants" id="TraesKARUn01G0175530.1">
    <property type="protein sequence ID" value="cds.TraesKARUn01G0175530.1"/>
    <property type="gene ID" value="TraesKARUn01G0175530"/>
</dbReference>
<dbReference type="EnsemblPlants" id="TraesKARUn01G0176000.1">
    <property type="protein sequence ID" value="cds.TraesKARUn01G0176000.1"/>
    <property type="gene ID" value="TraesKARUn01G0176000"/>
</dbReference>
<dbReference type="EnsemblPlants" id="TraesKARUn01G0176460.1">
    <property type="protein sequence ID" value="cds.TraesKARUn01G0176460.1"/>
    <property type="gene ID" value="TraesKARUn01G0176460"/>
</dbReference>
<dbReference type="EnsemblPlants" id="TraesKARUn01G0178250.1">
    <property type="protein sequence ID" value="cds.TraesKARUn01G0178250.1"/>
    <property type="gene ID" value="TraesKARUn01G0178250"/>
</dbReference>
<dbReference type="EnsemblPlants" id="TraesKARUn01G0180370.1">
    <property type="protein sequence ID" value="cds.TraesKARUn01G0180370.1"/>
    <property type="gene ID" value="TraesKARUn01G0180370"/>
</dbReference>
<dbReference type="EnsemblPlants" id="TraesKARUn01G0183110.1">
    <property type="protein sequence ID" value="cds.TraesKARUn01G0183110.1"/>
    <property type="gene ID" value="TraesKARUn01G0183110"/>
</dbReference>
<dbReference type="EnsemblPlants" id="TraesKARUn01G0185350.1">
    <property type="protein sequence ID" value="cds.TraesKARUn01G0185350.1"/>
    <property type="gene ID" value="TraesKARUn01G0185350"/>
</dbReference>
<dbReference type="EnsemblPlants" id="TraesKARUn01G0185550.1">
    <property type="protein sequence ID" value="cds.TraesKARUn01G0185550.1"/>
    <property type="gene ID" value="TraesKARUn01G0185550"/>
</dbReference>
<dbReference type="EnsemblPlants" id="TraesKARUn01G0186550.1">
    <property type="protein sequence ID" value="cds.TraesKARUn01G0186550.1"/>
    <property type="gene ID" value="TraesKARUn01G0186550"/>
</dbReference>
<dbReference type="EnsemblPlants" id="TraesKARUn01G0188330.1">
    <property type="protein sequence ID" value="cds.TraesKARUn01G0188330.1"/>
    <property type="gene ID" value="TraesKARUn01G0188330"/>
</dbReference>
<dbReference type="EnsemblPlants" id="TraesKARUn01G0190930.1">
    <property type="protein sequence ID" value="cds.TraesKARUn01G0190930.1"/>
    <property type="gene ID" value="TraesKARUn01G0190930"/>
</dbReference>
<dbReference type="EnsemblPlants" id="TraesKARUn01G0193810.1">
    <property type="protein sequence ID" value="cds.TraesKARUn01G0193810.1"/>
    <property type="gene ID" value="TraesKARUn01G0193810"/>
</dbReference>
<dbReference type="EnsemblPlants" id="TraesPARA_EIv1.0_2055060.1">
    <property type="protein sequence ID" value="TraesPARA_EIv1.0_2055060.1.CDS1"/>
    <property type="gene ID" value="TraesPARA_EIv1.0_2055060"/>
</dbReference>
<dbReference type="EnsemblPlants" id="TraesPARA_EIv1.0_2645020.1">
    <property type="protein sequence ID" value="TraesPARA_EIv1.0_2645020.1.CDS1"/>
    <property type="gene ID" value="TraesPARA_EIv1.0_2645020"/>
</dbReference>
<dbReference type="EnsemblPlants" id="TraesPARA_EIv1.0_2646900.1">
    <property type="protein sequence ID" value="TraesPARA_EIv1.0_2646900.1.CDS1"/>
    <property type="gene ID" value="TraesPARA_EIv1.0_2646900"/>
</dbReference>
<dbReference type="EnsemblPlants" id="TraesPARA_EIv1.0_2648040.1">
    <property type="protein sequence ID" value="TraesPARA_EIv1.0_2648040.1.CDS1"/>
    <property type="gene ID" value="TraesPARA_EIv1.0_2648040"/>
</dbReference>
<dbReference type="EnsemblPlants" id="TraesPARA_EIv1.0_2649210.1">
    <property type="protein sequence ID" value="TraesPARA_EIv1.0_2649210.1.CDS1"/>
    <property type="gene ID" value="TraesPARA_EIv1.0_2649210"/>
</dbReference>
<dbReference type="EnsemblPlants" id="TraesPARA_EIv1.0_2650230.1">
    <property type="protein sequence ID" value="TraesPARA_EIv1.0_2650230.1.CDS1"/>
    <property type="gene ID" value="TraesPARA_EIv1.0_2650230"/>
</dbReference>
<dbReference type="EnsemblPlants" id="TraesPARA_EIv1.0_2650420.1">
    <property type="protein sequence ID" value="TraesPARA_EIv1.0_2650420.1.CDS1"/>
    <property type="gene ID" value="TraesPARA_EIv1.0_2650420"/>
</dbReference>
<dbReference type="EnsemblPlants" id="TraesPARA_EIv1.0_2650470.1">
    <property type="protein sequence ID" value="TraesPARA_EIv1.0_2650470.1.CDS1"/>
    <property type="gene ID" value="TraesPARA_EIv1.0_2650470"/>
</dbReference>
<dbReference type="EnsemblPlants" id="TraesPARA_EIv1.0_2652710.1">
    <property type="protein sequence ID" value="TraesPARA_EIv1.0_2652710.1.CDS1"/>
    <property type="gene ID" value="TraesPARA_EIv1.0_2652710"/>
</dbReference>
<dbReference type="EnsemblPlants" id="TraesPARA_EIv1.0_2652870.1">
    <property type="protein sequence ID" value="TraesPARA_EIv1.0_2652870.1.CDS1"/>
    <property type="gene ID" value="TraesPARA_EIv1.0_2652870"/>
</dbReference>
<dbReference type="EnsemblPlants" id="TraesPARA_EIv1.0_2653230.1">
    <property type="protein sequence ID" value="TraesPARA_EIv1.0_2653230.1.CDS1"/>
    <property type="gene ID" value="TraesPARA_EIv1.0_2653230"/>
</dbReference>
<dbReference type="EnsemblPlants" id="TraesPARA_EIv1.0_2653630.1">
    <property type="protein sequence ID" value="TraesPARA_EIv1.0_2653630.1.CDS1"/>
    <property type="gene ID" value="TraesPARA_EIv1.0_2653630"/>
</dbReference>
<dbReference type="EnsemblPlants" id="TraesPARA_EIv1.0_2654000.1">
    <property type="protein sequence ID" value="TraesPARA_EIv1.0_2654000.1.CDS1"/>
    <property type="gene ID" value="TraesPARA_EIv1.0_2654000"/>
</dbReference>
<dbReference type="EnsemblPlants" id="TraesPARA_EIv1.0_2655110.1">
    <property type="protein sequence ID" value="TraesPARA_EIv1.0_2655110.1.CDS1"/>
    <property type="gene ID" value="TraesPARA_EIv1.0_2655110"/>
</dbReference>
<dbReference type="EnsemblPlants" id="TraesPARA_EIv1.0_2655250.1">
    <property type="protein sequence ID" value="TraesPARA_EIv1.0_2655250.1.CDS1"/>
    <property type="gene ID" value="TraesPARA_EIv1.0_2655250"/>
</dbReference>
<dbReference type="EnsemblPlants" id="TraesPARA_EIv1.0_2655480.1">
    <property type="protein sequence ID" value="TraesPARA_EIv1.0_2655480.1.CDS1"/>
    <property type="gene ID" value="TraesPARA_EIv1.0_2655480"/>
</dbReference>
<dbReference type="EnsemblPlants" id="TraesPARA_EIv1.0_2656410.1">
    <property type="protein sequence ID" value="TraesPARA_EIv1.0_2656410.1.CDS1"/>
    <property type="gene ID" value="TraesPARA_EIv1.0_2656410"/>
</dbReference>
<dbReference type="EnsemblPlants" id="TraesPARA_EIv1.0_2656510.1">
    <property type="protein sequence ID" value="TraesPARA_EIv1.0_2656510.1.CDS1"/>
    <property type="gene ID" value="TraesPARA_EIv1.0_2656510"/>
</dbReference>
<dbReference type="EnsemblPlants" id="TraesPARA_EIv1.0_2658350.1">
    <property type="protein sequence ID" value="TraesPARA_EIv1.0_2658350.1.CDS1"/>
    <property type="gene ID" value="TraesPARA_EIv1.0_2658350"/>
</dbReference>
<dbReference type="EnsemblPlants" id="TraesPARA_EIv1.0_2660220.1">
    <property type="protein sequence ID" value="TraesPARA_EIv1.0_2660220.1.CDS1"/>
    <property type="gene ID" value="TraesPARA_EIv1.0_2660220"/>
</dbReference>
<dbReference type="EnsemblPlants" id="TraesPARA_EIv1.0_2662900.1">
    <property type="protein sequence ID" value="TraesPARA_EIv1.0_2662900.1.CDS1"/>
    <property type="gene ID" value="TraesPARA_EIv1.0_2662900"/>
</dbReference>
<dbReference type="EnsemblPlants" id="TraesPARA_EIv1.0_2663150.1">
    <property type="protein sequence ID" value="TraesPARA_EIv1.0_2663150.1.CDS1"/>
    <property type="gene ID" value="TraesPARA_EIv1.0_2663150"/>
</dbReference>
<dbReference type="EnsemblPlants" id="TraesPARA_EIv1.0_2663330.1">
    <property type="protein sequence ID" value="TraesPARA_EIv1.0_2663330.1.CDS1"/>
    <property type="gene ID" value="TraesPARA_EIv1.0_2663330"/>
</dbReference>
<dbReference type="EnsemblPlants" id="TraesPARA_EIv1.0_2663420.1">
    <property type="protein sequence ID" value="TraesPARA_EIv1.0_2663420.1.CDS1"/>
    <property type="gene ID" value="TraesPARA_EIv1.0_2663420"/>
</dbReference>
<dbReference type="EnsemblPlants" id="TraesPARA_EIv1.0_2664530.1">
    <property type="protein sequence ID" value="TraesPARA_EIv1.0_2664530.1.CDS1"/>
    <property type="gene ID" value="TraesPARA_EIv1.0_2664530"/>
</dbReference>
<dbReference type="EnsemblPlants" id="TraesPARA_EIv1.0_2666970.1">
    <property type="protein sequence ID" value="TraesPARA_EIv1.0_2666970.1.CDS1"/>
    <property type="gene ID" value="TraesPARA_EIv1.0_2666970"/>
</dbReference>
<dbReference type="EnsemblPlants" id="TraesPARA_EIv1.0_2669250.1">
    <property type="protein sequence ID" value="TraesPARA_EIv1.0_2669250.1.CDS1"/>
    <property type="gene ID" value="TraesPARA_EIv1.0_2669250"/>
</dbReference>
<dbReference type="EnsemblPlants" id="TraesPARA_EIv1.0_2670290.1">
    <property type="protein sequence ID" value="TraesPARA_EIv1.0_2670290.1.CDS1"/>
    <property type="gene ID" value="TraesPARA_EIv1.0_2670290"/>
</dbReference>
<dbReference type="EnsemblPlants" id="TraesPARA_EIv1.0_2670960.1">
    <property type="protein sequence ID" value="TraesPARA_EIv1.0_2670960.1.CDS1"/>
    <property type="gene ID" value="TraesPARA_EIv1.0_2670960"/>
</dbReference>
<dbReference type="EnsemblPlants" id="TraesPARA_EIv1.0_2675900.1">
    <property type="protein sequence ID" value="TraesPARA_EIv1.0_2675900.1.CDS1"/>
    <property type="gene ID" value="TraesPARA_EIv1.0_2675900"/>
</dbReference>
<dbReference type="EnsemblPlants" id="TraesPARA_EIv1.0_2680130.1">
    <property type="protein sequence ID" value="TraesPARA_EIv1.0_2680130.1.CDS1"/>
    <property type="gene ID" value="TraesPARA_EIv1.0_2680130"/>
</dbReference>
<dbReference type="EnsemblPlants" id="TraesPARA_EIv1.0_2681160.1">
    <property type="protein sequence ID" value="TraesPARA_EIv1.0_2681160.1.CDS1"/>
    <property type="gene ID" value="TraesPARA_EIv1.0_2681160"/>
</dbReference>
<dbReference type="EnsemblPlants" id="TraesRN3B0100434800.1">
    <property type="protein sequence ID" value="TraesRN3B0100434800.1"/>
    <property type="gene ID" value="TraesRN3B0100434800"/>
</dbReference>
<dbReference type="EnsemblPlants" id="TraesRN3B0100434900.1">
    <property type="protein sequence ID" value="TraesRN3B0100434900.1"/>
    <property type="gene ID" value="TraesRN3B0100434900"/>
</dbReference>
<dbReference type="EnsemblPlants" id="TraesRN5D0100016200.1">
    <property type="protein sequence ID" value="TraesRN5D0100016200.1"/>
    <property type="gene ID" value="TraesRN5D0100016200"/>
</dbReference>
<dbReference type="GeneID" id="803163"/>
<dbReference type="Gramene" id="TraesKAR6B01G0219560.1">
    <property type="protein sequence ID" value="cds.TraesKAR6B01G0219560.1"/>
    <property type="gene ID" value="TraesKAR6B01G0219560"/>
</dbReference>
<dbReference type="Gramene" id="TraesKAR6B01G0220310.1">
    <property type="protein sequence ID" value="cds.TraesKAR6B01G0220310.1"/>
    <property type="gene ID" value="TraesKAR6B01G0220310"/>
</dbReference>
<dbReference type="Gramene" id="TraesKARUn01G0030380.1">
    <property type="protein sequence ID" value="cds.TraesKARUn01G0030380.1"/>
    <property type="gene ID" value="TraesKARUn01G0030380"/>
</dbReference>
<dbReference type="Gramene" id="TraesKARUn01G0030440.1">
    <property type="protein sequence ID" value="cds.TraesKARUn01G0030440.1"/>
    <property type="gene ID" value="TraesKARUn01G0030440"/>
</dbReference>
<dbReference type="Gramene" id="TraesKARUn01G0030830.1">
    <property type="protein sequence ID" value="cds.TraesKARUn01G0030830.1"/>
    <property type="gene ID" value="TraesKARUn01G0030830"/>
</dbReference>
<dbReference type="Gramene" id="TraesKARUn01G0031370.1">
    <property type="protein sequence ID" value="cds.TraesKARUn01G0031370.1"/>
    <property type="gene ID" value="TraesKARUn01G0031370"/>
</dbReference>
<dbReference type="Gramene" id="TraesKARUn01G0034460.1">
    <property type="protein sequence ID" value="cds.TraesKARUn01G0034460.1"/>
    <property type="gene ID" value="TraesKARUn01G0034460"/>
</dbReference>
<dbReference type="Gramene" id="TraesKARUn01G0036310.1">
    <property type="protein sequence ID" value="cds.TraesKARUn01G0036310.1"/>
    <property type="gene ID" value="TraesKARUn01G0036310"/>
</dbReference>
<dbReference type="Gramene" id="TraesKARUn01G0061440.1">
    <property type="protein sequence ID" value="cds.TraesKARUn01G0061440.1"/>
    <property type="gene ID" value="TraesKARUn01G0061440"/>
</dbReference>
<dbReference type="Gramene" id="TraesKARUn01G0066550.1">
    <property type="protein sequence ID" value="cds.TraesKARUn01G0066550.1"/>
    <property type="gene ID" value="TraesKARUn01G0066550"/>
</dbReference>
<dbReference type="Gramene" id="TraesKARUn01G0066770.1">
    <property type="protein sequence ID" value="cds.TraesKARUn01G0066770.1"/>
    <property type="gene ID" value="TraesKARUn01G0066770"/>
</dbReference>
<dbReference type="Gramene" id="TraesKARUn01G0068090.1">
    <property type="protein sequence ID" value="cds.TraesKARUn01G0068090.1"/>
    <property type="gene ID" value="TraesKARUn01G0068090"/>
</dbReference>
<dbReference type="Gramene" id="TraesKARUn01G0068550.1">
    <property type="protein sequence ID" value="cds.TraesKARUn01G0068550.1"/>
    <property type="gene ID" value="TraesKARUn01G0068550"/>
</dbReference>
<dbReference type="Gramene" id="TraesKARUn01G0069370.1">
    <property type="protein sequence ID" value="cds.TraesKARUn01G0069370.1"/>
    <property type="gene ID" value="TraesKARUn01G0069370"/>
</dbReference>
<dbReference type="Gramene" id="TraesKARUn01G0070730.1">
    <property type="protein sequence ID" value="cds.TraesKARUn01G0070730.1"/>
    <property type="gene ID" value="TraesKARUn01G0070730"/>
</dbReference>
<dbReference type="Gramene" id="TraesKARUn01G0071580.1">
    <property type="protein sequence ID" value="cds.TraesKARUn01G0071580.1"/>
    <property type="gene ID" value="TraesKARUn01G0071580"/>
</dbReference>
<dbReference type="Gramene" id="TraesKARUn01G0072090.1">
    <property type="protein sequence ID" value="cds.TraesKARUn01G0072090.1"/>
    <property type="gene ID" value="TraesKARUn01G0072090"/>
</dbReference>
<dbReference type="Gramene" id="TraesKARUn01G0076080.1">
    <property type="protein sequence ID" value="cds.TraesKARUn01G0076080.1"/>
    <property type="gene ID" value="TraesKARUn01G0076080"/>
</dbReference>
<dbReference type="Gramene" id="TraesKARUn01G0077620.1">
    <property type="protein sequence ID" value="cds.TraesKARUn01G0077620.1"/>
    <property type="gene ID" value="TraesKARUn01G0077620"/>
</dbReference>
<dbReference type="Gramene" id="TraesKARUn01G0082050.1">
    <property type="protein sequence ID" value="cds.TraesKARUn01G0082050.1"/>
    <property type="gene ID" value="TraesKARUn01G0082050"/>
</dbReference>
<dbReference type="Gramene" id="TraesKARUn01G0084530.1">
    <property type="protein sequence ID" value="cds.TraesKARUn01G0084530.1"/>
    <property type="gene ID" value="TraesKARUn01G0084530"/>
</dbReference>
<dbReference type="Gramene" id="TraesKARUn01G0086090.1">
    <property type="protein sequence ID" value="cds.TraesKARUn01G0086090.1"/>
    <property type="gene ID" value="TraesKARUn01G0086090"/>
</dbReference>
<dbReference type="Gramene" id="TraesKARUn01G0086940.1">
    <property type="protein sequence ID" value="cds.TraesKARUn01G0086940.1"/>
    <property type="gene ID" value="TraesKARUn01G0086940"/>
</dbReference>
<dbReference type="Gramene" id="TraesKARUn01G0087610.1">
    <property type="protein sequence ID" value="cds.TraesKARUn01G0087610.1"/>
    <property type="gene ID" value="TraesKARUn01G0087610"/>
</dbReference>
<dbReference type="Gramene" id="TraesKARUn01G0088700.1">
    <property type="protein sequence ID" value="cds.TraesKARUn01G0088700.1"/>
    <property type="gene ID" value="TraesKARUn01G0088700"/>
</dbReference>
<dbReference type="Gramene" id="TraesKARUn01G0089840.1">
    <property type="protein sequence ID" value="cds.TraesKARUn01G0089840.1"/>
    <property type="gene ID" value="TraesKARUn01G0089840"/>
</dbReference>
<dbReference type="Gramene" id="TraesKARUn01G0090370.1">
    <property type="protein sequence ID" value="cds.TraesKARUn01G0090370.1"/>
    <property type="gene ID" value="TraesKARUn01G0090370"/>
</dbReference>
<dbReference type="Gramene" id="TraesKARUn01G0091000.1">
    <property type="protein sequence ID" value="cds.TraesKARUn01G0091000.1"/>
    <property type="gene ID" value="TraesKARUn01G0091000"/>
</dbReference>
<dbReference type="Gramene" id="TraesKARUn01G0092390.1">
    <property type="protein sequence ID" value="cds.TraesKARUn01G0092390.1"/>
    <property type="gene ID" value="TraesKARUn01G0092390"/>
</dbReference>
<dbReference type="Gramene" id="TraesKARUn01G0094740.1">
    <property type="protein sequence ID" value="cds.TraesKARUn01G0094740.1"/>
    <property type="gene ID" value="TraesKARUn01G0094740"/>
</dbReference>
<dbReference type="Gramene" id="TraesKARUn01G0095660.1">
    <property type="protein sequence ID" value="cds.TraesKARUn01G0095660.1"/>
    <property type="gene ID" value="TraesKARUn01G0095660"/>
</dbReference>
<dbReference type="Gramene" id="TraesKARUn01G0095830.1">
    <property type="protein sequence ID" value="cds.TraesKARUn01G0095830.1"/>
    <property type="gene ID" value="TraesKARUn01G0095830"/>
</dbReference>
<dbReference type="Gramene" id="TraesKARUn01G0095970.1">
    <property type="protein sequence ID" value="cds.TraesKARUn01G0095970.1"/>
    <property type="gene ID" value="TraesKARUn01G0095970"/>
</dbReference>
<dbReference type="Gramene" id="TraesKARUn01G0096170.1">
    <property type="protein sequence ID" value="cds.TraesKARUn01G0096170.1"/>
    <property type="gene ID" value="TraesKARUn01G0096170"/>
</dbReference>
<dbReference type="Gramene" id="TraesKARUn01G0096510.1">
    <property type="protein sequence ID" value="cds.TraesKARUn01G0096510.1"/>
    <property type="gene ID" value="TraesKARUn01G0096510"/>
</dbReference>
<dbReference type="Gramene" id="TraesKARUn01G0096580.1">
    <property type="protein sequence ID" value="cds.TraesKARUn01G0096580.1"/>
    <property type="gene ID" value="TraesKARUn01G0096580"/>
</dbReference>
<dbReference type="Gramene" id="TraesKARUn01G0097010.1">
    <property type="protein sequence ID" value="cds.TraesKARUn01G0097010.1"/>
    <property type="gene ID" value="TraesKARUn01G0097010"/>
</dbReference>
<dbReference type="Gramene" id="TraesKARUn01G0097520.1">
    <property type="protein sequence ID" value="cds.TraesKARUn01G0097520.1"/>
    <property type="gene ID" value="TraesKARUn01G0097520"/>
</dbReference>
<dbReference type="Gramene" id="TraesKARUn01G0097700.1">
    <property type="protein sequence ID" value="cds.TraesKARUn01G0097700.1"/>
    <property type="gene ID" value="TraesKARUn01G0097700"/>
</dbReference>
<dbReference type="Gramene" id="TraesKARUn01G0097970.1">
    <property type="protein sequence ID" value="cds.TraesKARUn01G0097970.1"/>
    <property type="gene ID" value="TraesKARUn01G0097970"/>
</dbReference>
<dbReference type="Gramene" id="TraesKARUn01G0098070.1">
    <property type="protein sequence ID" value="cds.TraesKARUn01G0098070.1"/>
    <property type="gene ID" value="TraesKARUn01G0098070"/>
</dbReference>
<dbReference type="Gramene" id="TraesKARUn01G0099320.1">
    <property type="protein sequence ID" value="cds.TraesKARUn01G0099320.1"/>
    <property type="gene ID" value="TraesKARUn01G0099320"/>
</dbReference>
<dbReference type="Gramene" id="TraesKARUn01G0099940.1">
    <property type="protein sequence ID" value="cds.TraesKARUn01G0099940.1"/>
    <property type="gene ID" value="TraesKARUn01G0099940"/>
</dbReference>
<dbReference type="Gramene" id="TraesKARUn01G0100060.1">
    <property type="protein sequence ID" value="cds.TraesKARUn01G0100060.1"/>
    <property type="gene ID" value="TraesKARUn01G0100060"/>
</dbReference>
<dbReference type="Gramene" id="TraesKARUn01G0100590.1">
    <property type="protein sequence ID" value="cds.TraesKARUn01G0100590.1"/>
    <property type="gene ID" value="TraesKARUn01G0100590"/>
</dbReference>
<dbReference type="Gramene" id="TraesKARUn01G0102170.1">
    <property type="protein sequence ID" value="cds.TraesKARUn01G0102170.1"/>
    <property type="gene ID" value="TraesKARUn01G0102170"/>
</dbReference>
<dbReference type="Gramene" id="TraesKARUn01G0102360.1">
    <property type="protein sequence ID" value="cds.TraesKARUn01G0102360.1"/>
    <property type="gene ID" value="TraesKARUn01G0102360"/>
</dbReference>
<dbReference type="Gramene" id="TraesKARUn01G0102860.1">
    <property type="protein sequence ID" value="cds.TraesKARUn01G0102860.1"/>
    <property type="gene ID" value="TraesKARUn01G0102860"/>
</dbReference>
<dbReference type="Gramene" id="TraesKARUn01G0103900.1">
    <property type="protein sequence ID" value="cds.TraesKARUn01G0103900.1"/>
    <property type="gene ID" value="TraesKARUn01G0103900"/>
</dbReference>
<dbReference type="Gramene" id="TraesKARUn01G0104180.1">
    <property type="protein sequence ID" value="cds.TraesKARUn01G0104180.1"/>
    <property type="gene ID" value="TraesKARUn01G0104180"/>
</dbReference>
<dbReference type="Gramene" id="TraesKARUn01G0104320.1">
    <property type="protein sequence ID" value="cds.TraesKARUn01G0104320.1"/>
    <property type="gene ID" value="TraesKARUn01G0104320"/>
</dbReference>
<dbReference type="Gramene" id="TraesKARUn01G0104850.1">
    <property type="protein sequence ID" value="cds.TraesKARUn01G0104850.1"/>
    <property type="gene ID" value="TraesKARUn01G0104850"/>
</dbReference>
<dbReference type="Gramene" id="TraesKARUn01G0104930.1">
    <property type="protein sequence ID" value="cds.TraesKARUn01G0104930.1"/>
    <property type="gene ID" value="TraesKARUn01G0104930"/>
</dbReference>
<dbReference type="Gramene" id="TraesKARUn01G0106890.1">
    <property type="protein sequence ID" value="cds.TraesKARUn01G0106890.1"/>
    <property type="gene ID" value="TraesKARUn01G0106890"/>
</dbReference>
<dbReference type="Gramene" id="TraesKARUn01G0107270.1">
    <property type="protein sequence ID" value="cds.TraesKARUn01G0107270.1"/>
    <property type="gene ID" value="TraesKARUn01G0107270"/>
</dbReference>
<dbReference type="Gramene" id="TraesKARUn01G0107980.1">
    <property type="protein sequence ID" value="cds.TraesKARUn01G0107980.1"/>
    <property type="gene ID" value="TraesKARUn01G0107980"/>
</dbReference>
<dbReference type="Gramene" id="TraesKARUn01G0110150.1">
    <property type="protein sequence ID" value="cds.TraesKARUn01G0110150.1"/>
    <property type="gene ID" value="TraesKARUn01G0110150"/>
</dbReference>
<dbReference type="Gramene" id="TraesKARUn01G0111940.1">
    <property type="protein sequence ID" value="cds.TraesKARUn01G0111940.1"/>
    <property type="gene ID" value="TraesKARUn01G0111940"/>
</dbReference>
<dbReference type="Gramene" id="TraesKARUn01G0112000.1">
    <property type="protein sequence ID" value="cds.TraesKARUn01G0112000.1"/>
    <property type="gene ID" value="TraesKARUn01G0112000"/>
</dbReference>
<dbReference type="Gramene" id="TraesKARUn01G0112330.1">
    <property type="protein sequence ID" value="cds.TraesKARUn01G0112330.1"/>
    <property type="gene ID" value="TraesKARUn01G0112330"/>
</dbReference>
<dbReference type="Gramene" id="TraesKARUn01G0112910.1">
    <property type="protein sequence ID" value="cds.TraesKARUn01G0112910.1"/>
    <property type="gene ID" value="TraesKARUn01G0112910"/>
</dbReference>
<dbReference type="Gramene" id="TraesKARUn01G0114360.1">
    <property type="protein sequence ID" value="cds.TraesKARUn01G0114360.1"/>
    <property type="gene ID" value="TraesKARUn01G0114360"/>
</dbReference>
<dbReference type="Gramene" id="TraesKARUn01G0115010.1">
    <property type="protein sequence ID" value="cds.TraesKARUn01G0115010.1"/>
    <property type="gene ID" value="TraesKARUn01G0115010"/>
</dbReference>
<dbReference type="Gramene" id="TraesKARUn01G0115370.1">
    <property type="protein sequence ID" value="cds.TraesKARUn01G0115370.1"/>
    <property type="gene ID" value="TraesKARUn01G0115370"/>
</dbReference>
<dbReference type="Gramene" id="TraesKARUn01G0116120.1">
    <property type="protein sequence ID" value="cds.TraesKARUn01G0116120.1"/>
    <property type="gene ID" value="TraesKARUn01G0116120"/>
</dbReference>
<dbReference type="Gramene" id="TraesKARUn01G0116350.1">
    <property type="protein sequence ID" value="cds.TraesKARUn01G0116350.1"/>
    <property type="gene ID" value="TraesKARUn01G0116350"/>
</dbReference>
<dbReference type="Gramene" id="TraesKARUn01G0118420.1">
    <property type="protein sequence ID" value="cds.TraesKARUn01G0118420.1"/>
    <property type="gene ID" value="TraesKARUn01G0118420"/>
</dbReference>
<dbReference type="Gramene" id="TraesKARUn01G0118530.1">
    <property type="protein sequence ID" value="cds.TraesKARUn01G0118530.1"/>
    <property type="gene ID" value="TraesKARUn01G0118530"/>
</dbReference>
<dbReference type="Gramene" id="TraesKARUn01G0119010.1">
    <property type="protein sequence ID" value="cds.TraesKARUn01G0119010.1"/>
    <property type="gene ID" value="TraesKARUn01G0119010"/>
</dbReference>
<dbReference type="Gramene" id="TraesKARUn01G0120270.1">
    <property type="protein sequence ID" value="cds.TraesKARUn01G0120270.1"/>
    <property type="gene ID" value="TraesKARUn01G0120270"/>
</dbReference>
<dbReference type="Gramene" id="TraesKARUn01G0120390.1">
    <property type="protein sequence ID" value="cds.TraesKARUn01G0120390.1"/>
    <property type="gene ID" value="TraesKARUn01G0120390"/>
</dbReference>
<dbReference type="Gramene" id="TraesKARUn01G0121860.1">
    <property type="protein sequence ID" value="cds.TraesKARUn01G0121860.1"/>
    <property type="gene ID" value="TraesKARUn01G0121860"/>
</dbReference>
<dbReference type="Gramene" id="TraesKARUn01G0122120.1">
    <property type="protein sequence ID" value="cds.TraesKARUn01G0122120.1"/>
    <property type="gene ID" value="TraesKARUn01G0122120"/>
</dbReference>
<dbReference type="Gramene" id="TraesKARUn01G0122370.1">
    <property type="protein sequence ID" value="cds.TraesKARUn01G0122370.1"/>
    <property type="gene ID" value="TraesKARUn01G0122370"/>
</dbReference>
<dbReference type="Gramene" id="TraesKARUn01G0123750.1">
    <property type="protein sequence ID" value="cds.TraesKARUn01G0123750.1"/>
    <property type="gene ID" value="TraesKARUn01G0123750"/>
</dbReference>
<dbReference type="Gramene" id="TraesKARUn01G0124220.1">
    <property type="protein sequence ID" value="cds.TraesKARUn01G0124220.1"/>
    <property type="gene ID" value="TraesKARUn01G0124220"/>
</dbReference>
<dbReference type="Gramene" id="TraesKARUn01G0124620.1">
    <property type="protein sequence ID" value="cds.TraesKARUn01G0124620.1"/>
    <property type="gene ID" value="TraesKARUn01G0124620"/>
</dbReference>
<dbReference type="Gramene" id="TraesKARUn01G0125170.1">
    <property type="protein sequence ID" value="cds.TraesKARUn01G0125170.1"/>
    <property type="gene ID" value="TraesKARUn01G0125170"/>
</dbReference>
<dbReference type="Gramene" id="TraesKARUn01G0126050.1">
    <property type="protein sequence ID" value="cds.TraesKARUn01G0126050.1"/>
    <property type="gene ID" value="TraesKARUn01G0126050"/>
</dbReference>
<dbReference type="Gramene" id="TraesKARUn01G0128120.1">
    <property type="protein sequence ID" value="cds.TraesKARUn01G0128120.1"/>
    <property type="gene ID" value="TraesKARUn01G0128120"/>
</dbReference>
<dbReference type="Gramene" id="TraesKARUn01G0128740.1">
    <property type="protein sequence ID" value="cds.TraesKARUn01G0128740.1"/>
    <property type="gene ID" value="TraesKARUn01G0128740"/>
</dbReference>
<dbReference type="Gramene" id="TraesKARUn01G0128990.1">
    <property type="protein sequence ID" value="cds.TraesKARUn01G0128990.1"/>
    <property type="gene ID" value="TraesKARUn01G0128990"/>
</dbReference>
<dbReference type="Gramene" id="TraesKARUn01G0129740.1">
    <property type="protein sequence ID" value="cds.TraesKARUn01G0129740.1"/>
    <property type="gene ID" value="TraesKARUn01G0129740"/>
</dbReference>
<dbReference type="Gramene" id="TraesKARUn01G0130040.1">
    <property type="protein sequence ID" value="cds.TraesKARUn01G0130040.1"/>
    <property type="gene ID" value="TraesKARUn01G0130040"/>
</dbReference>
<dbReference type="Gramene" id="TraesKARUn01G0133040.1">
    <property type="protein sequence ID" value="cds.TraesKARUn01G0133040.1"/>
    <property type="gene ID" value="TraesKARUn01G0133040"/>
</dbReference>
<dbReference type="Gramene" id="TraesKARUn01G0134250.1">
    <property type="protein sequence ID" value="cds.TraesKARUn01G0134250.1"/>
    <property type="gene ID" value="TraesKARUn01G0134250"/>
</dbReference>
<dbReference type="Gramene" id="TraesKARUn01G0134760.1">
    <property type="protein sequence ID" value="cds.TraesKARUn01G0134760.1"/>
    <property type="gene ID" value="TraesKARUn01G0134760"/>
</dbReference>
<dbReference type="Gramene" id="TraesKARUn01G0134880.1">
    <property type="protein sequence ID" value="cds.TraesKARUn01G0134880.1"/>
    <property type="gene ID" value="TraesKARUn01G0134880"/>
</dbReference>
<dbReference type="Gramene" id="TraesKARUn01G0135060.1">
    <property type="protein sequence ID" value="cds.TraesKARUn01G0135060.1"/>
    <property type="gene ID" value="TraesKARUn01G0135060"/>
</dbReference>
<dbReference type="Gramene" id="TraesKARUn01G0135710.1">
    <property type="protein sequence ID" value="cds.TraesKARUn01G0135710.1"/>
    <property type="gene ID" value="TraesKARUn01G0135710"/>
</dbReference>
<dbReference type="Gramene" id="TraesKARUn01G0136040.1">
    <property type="protein sequence ID" value="cds.TraesKARUn01G0136040.1"/>
    <property type="gene ID" value="TraesKARUn01G0136040"/>
</dbReference>
<dbReference type="Gramene" id="TraesKARUn01G0136670.1">
    <property type="protein sequence ID" value="cds.TraesKARUn01G0136670.1"/>
    <property type="gene ID" value="TraesKARUn01G0136670"/>
</dbReference>
<dbReference type="Gramene" id="TraesKARUn01G0138010.1">
    <property type="protein sequence ID" value="cds.TraesKARUn01G0138010.1"/>
    <property type="gene ID" value="TraesKARUn01G0138010"/>
</dbReference>
<dbReference type="Gramene" id="TraesKARUn01G0138180.1">
    <property type="protein sequence ID" value="cds.TraesKARUn01G0138180.1"/>
    <property type="gene ID" value="TraesKARUn01G0138180"/>
</dbReference>
<dbReference type="Gramene" id="TraesKARUn01G0139060.1">
    <property type="protein sequence ID" value="cds.TraesKARUn01G0139060.1"/>
    <property type="gene ID" value="TraesKARUn01G0139060"/>
</dbReference>
<dbReference type="Gramene" id="TraesKARUn01G0139300.1">
    <property type="protein sequence ID" value="cds.TraesKARUn01G0139300.1"/>
    <property type="gene ID" value="TraesKARUn01G0139300"/>
</dbReference>
<dbReference type="Gramene" id="TraesKARUn01G0141460.1">
    <property type="protein sequence ID" value="cds.TraesKARUn01G0141460.1"/>
    <property type="gene ID" value="TraesKARUn01G0141460"/>
</dbReference>
<dbReference type="Gramene" id="TraesKARUn01G0142400.1">
    <property type="protein sequence ID" value="cds.TraesKARUn01G0142400.1"/>
    <property type="gene ID" value="TraesKARUn01G0142400"/>
</dbReference>
<dbReference type="Gramene" id="TraesKARUn01G0142720.1">
    <property type="protein sequence ID" value="cds.TraesKARUn01G0142720.1"/>
    <property type="gene ID" value="TraesKARUn01G0142720"/>
</dbReference>
<dbReference type="Gramene" id="TraesKARUn01G0143170.1">
    <property type="protein sequence ID" value="cds.TraesKARUn01G0143170.1"/>
    <property type="gene ID" value="TraesKARUn01G0143170"/>
</dbReference>
<dbReference type="Gramene" id="TraesKARUn01G0143660.1">
    <property type="protein sequence ID" value="cds.TraesKARUn01G0143660.1"/>
    <property type="gene ID" value="TraesKARUn01G0143660"/>
</dbReference>
<dbReference type="Gramene" id="TraesKARUn01G0144980.1">
    <property type="protein sequence ID" value="cds.TraesKARUn01G0144980.1"/>
    <property type="gene ID" value="TraesKARUn01G0144980"/>
</dbReference>
<dbReference type="Gramene" id="TraesKARUn01G0145460.1">
    <property type="protein sequence ID" value="cds.TraesKARUn01G0145460.1"/>
    <property type="gene ID" value="TraesKARUn01G0145460"/>
</dbReference>
<dbReference type="Gramene" id="TraesKARUn01G0145650.1">
    <property type="protein sequence ID" value="cds.TraesKARUn01G0145650.1"/>
    <property type="gene ID" value="TraesKARUn01G0145650"/>
</dbReference>
<dbReference type="Gramene" id="TraesKARUn01G0145860.1">
    <property type="protein sequence ID" value="cds.TraesKARUn01G0145860.1"/>
    <property type="gene ID" value="TraesKARUn01G0145860"/>
</dbReference>
<dbReference type="Gramene" id="TraesKARUn01G0146050.1">
    <property type="protein sequence ID" value="cds.TraesKARUn01G0146050.1"/>
    <property type="gene ID" value="TraesKARUn01G0146050"/>
</dbReference>
<dbReference type="Gramene" id="TraesKARUn01G0146370.1">
    <property type="protein sequence ID" value="cds.TraesKARUn01G0146370.1"/>
    <property type="gene ID" value="TraesKARUn01G0146370"/>
</dbReference>
<dbReference type="Gramene" id="TraesKARUn01G0147150.1">
    <property type="protein sequence ID" value="cds.TraesKARUn01G0147150.1"/>
    <property type="gene ID" value="TraesKARUn01G0147150"/>
</dbReference>
<dbReference type="Gramene" id="TraesKARUn01G0147340.1">
    <property type="protein sequence ID" value="cds.TraesKARUn01G0147340.1"/>
    <property type="gene ID" value="TraesKARUn01G0147340"/>
</dbReference>
<dbReference type="Gramene" id="TraesKARUn01G0147710.1">
    <property type="protein sequence ID" value="cds.TraesKARUn01G0147710.1"/>
    <property type="gene ID" value="TraesKARUn01G0147710"/>
</dbReference>
<dbReference type="Gramene" id="TraesKARUn01G0148180.1">
    <property type="protein sequence ID" value="cds.TraesKARUn01G0148180.1"/>
    <property type="gene ID" value="TraesKARUn01G0148180"/>
</dbReference>
<dbReference type="Gramene" id="TraesKARUn01G0148280.1">
    <property type="protein sequence ID" value="cds.TraesKARUn01G0148280.1"/>
    <property type="gene ID" value="TraesKARUn01G0148280"/>
</dbReference>
<dbReference type="Gramene" id="TraesKARUn01G0148630.1">
    <property type="protein sequence ID" value="cds.TraesKARUn01G0148630.1"/>
    <property type="gene ID" value="TraesKARUn01G0148630"/>
</dbReference>
<dbReference type="Gramene" id="TraesKARUn01G0149690.1">
    <property type="protein sequence ID" value="cds.TraesKARUn01G0149690.1"/>
    <property type="gene ID" value="TraesKARUn01G0149690"/>
</dbReference>
<dbReference type="Gramene" id="TraesKARUn01G0150570.1">
    <property type="protein sequence ID" value="cds.TraesKARUn01G0150570.1"/>
    <property type="gene ID" value="TraesKARUn01G0150570"/>
</dbReference>
<dbReference type="Gramene" id="TraesKARUn01G0152980.1">
    <property type="protein sequence ID" value="cds.TraesKARUn01G0152980.1"/>
    <property type="gene ID" value="TraesKARUn01G0152980"/>
</dbReference>
<dbReference type="Gramene" id="TraesKARUn01G0153190.1">
    <property type="protein sequence ID" value="cds.TraesKARUn01G0153190.1"/>
    <property type="gene ID" value="TraesKARUn01G0153190"/>
</dbReference>
<dbReference type="Gramene" id="TraesKARUn01G0153620.1">
    <property type="protein sequence ID" value="cds.TraesKARUn01G0153620.1"/>
    <property type="gene ID" value="TraesKARUn01G0153620"/>
</dbReference>
<dbReference type="Gramene" id="TraesKARUn01G0154300.1">
    <property type="protein sequence ID" value="cds.TraesKARUn01G0154300.1"/>
    <property type="gene ID" value="TraesKARUn01G0154300"/>
</dbReference>
<dbReference type="Gramene" id="TraesKARUn01G0155240.1">
    <property type="protein sequence ID" value="cds.TraesKARUn01G0155240.1"/>
    <property type="gene ID" value="TraesKARUn01G0155240"/>
</dbReference>
<dbReference type="Gramene" id="TraesKARUn01G0155490.1">
    <property type="protein sequence ID" value="cds.TraesKARUn01G0155490.1"/>
    <property type="gene ID" value="TraesKARUn01G0155490"/>
</dbReference>
<dbReference type="Gramene" id="TraesKARUn01G0156390.1">
    <property type="protein sequence ID" value="cds.TraesKARUn01G0156390.1"/>
    <property type="gene ID" value="TraesKARUn01G0156390"/>
</dbReference>
<dbReference type="Gramene" id="TraesKARUn01G0156920.1">
    <property type="protein sequence ID" value="cds.TraesKARUn01G0156920.1"/>
    <property type="gene ID" value="TraesKARUn01G0156920"/>
</dbReference>
<dbReference type="Gramene" id="TraesKARUn01G0157280.1">
    <property type="protein sequence ID" value="cds.TraesKARUn01G0157280.1"/>
    <property type="gene ID" value="TraesKARUn01G0157280"/>
</dbReference>
<dbReference type="Gramene" id="TraesKARUn01G0158000.1">
    <property type="protein sequence ID" value="cds.TraesKARUn01G0158000.1"/>
    <property type="gene ID" value="TraesKARUn01G0158000"/>
</dbReference>
<dbReference type="Gramene" id="TraesKARUn01G0158870.1">
    <property type="protein sequence ID" value="cds.TraesKARUn01G0158870.1"/>
    <property type="gene ID" value="TraesKARUn01G0158870"/>
</dbReference>
<dbReference type="Gramene" id="TraesKARUn01G0159890.1">
    <property type="protein sequence ID" value="cds.TraesKARUn01G0159890.1"/>
    <property type="gene ID" value="TraesKARUn01G0159890"/>
</dbReference>
<dbReference type="Gramene" id="TraesKARUn01G0160470.1">
    <property type="protein sequence ID" value="cds.TraesKARUn01G0160470.1"/>
    <property type="gene ID" value="TraesKARUn01G0160470"/>
</dbReference>
<dbReference type="Gramene" id="TraesKARUn01G0162540.1">
    <property type="protein sequence ID" value="cds.TraesKARUn01G0162540.1"/>
    <property type="gene ID" value="TraesKARUn01G0162540"/>
</dbReference>
<dbReference type="Gramene" id="TraesKARUn01G0164080.1">
    <property type="protein sequence ID" value="cds.TraesKARUn01G0164080.1"/>
    <property type="gene ID" value="TraesKARUn01G0164080"/>
</dbReference>
<dbReference type="Gramene" id="TraesKARUn01G0164580.1">
    <property type="protein sequence ID" value="cds.TraesKARUn01G0164580.1"/>
    <property type="gene ID" value="TraesKARUn01G0164580"/>
</dbReference>
<dbReference type="Gramene" id="TraesKARUn01G0165690.1">
    <property type="protein sequence ID" value="cds.TraesKARUn01G0165690.1"/>
    <property type="gene ID" value="TraesKARUn01G0165690"/>
</dbReference>
<dbReference type="Gramene" id="TraesKARUn01G0165750.1">
    <property type="protein sequence ID" value="cds.TraesKARUn01G0165750.1"/>
    <property type="gene ID" value="TraesKARUn01G0165750"/>
</dbReference>
<dbReference type="Gramene" id="TraesKARUn01G0166390.1">
    <property type="protein sequence ID" value="cds.TraesKARUn01G0166390.1"/>
    <property type="gene ID" value="TraesKARUn01G0166390"/>
</dbReference>
<dbReference type="Gramene" id="TraesKARUn01G0166470.1">
    <property type="protein sequence ID" value="cds.TraesKARUn01G0166470.1"/>
    <property type="gene ID" value="TraesKARUn01G0166470"/>
</dbReference>
<dbReference type="Gramene" id="TraesKARUn01G0168060.1">
    <property type="protein sequence ID" value="cds.TraesKARUn01G0168060.1"/>
    <property type="gene ID" value="TraesKARUn01G0168060"/>
</dbReference>
<dbReference type="Gramene" id="TraesKARUn01G0168340.1">
    <property type="protein sequence ID" value="cds.TraesKARUn01G0168340.1"/>
    <property type="gene ID" value="TraesKARUn01G0168340"/>
</dbReference>
<dbReference type="Gramene" id="TraesKARUn01G0168360.1">
    <property type="protein sequence ID" value="cds.TraesKARUn01G0168360.1"/>
    <property type="gene ID" value="TraesKARUn01G0168360"/>
</dbReference>
<dbReference type="Gramene" id="TraesKARUn01G0168490.1">
    <property type="protein sequence ID" value="cds.TraesKARUn01G0168490.1"/>
    <property type="gene ID" value="TraesKARUn01G0168490"/>
</dbReference>
<dbReference type="Gramene" id="TraesKARUn01G0168810.1">
    <property type="protein sequence ID" value="cds.TraesKARUn01G0168810.1"/>
    <property type="gene ID" value="TraesKARUn01G0168810"/>
</dbReference>
<dbReference type="Gramene" id="TraesKARUn01G0169520.1">
    <property type="protein sequence ID" value="cds.TraesKARUn01G0169520.1"/>
    <property type="gene ID" value="TraesKARUn01G0169520"/>
</dbReference>
<dbReference type="Gramene" id="TraesKARUn01G0172810.1">
    <property type="protein sequence ID" value="cds.TraesKARUn01G0172810.1"/>
    <property type="gene ID" value="TraesKARUn01G0172810"/>
</dbReference>
<dbReference type="Gramene" id="TraesKARUn01G0173100.1">
    <property type="protein sequence ID" value="cds.TraesKARUn01G0173100.1"/>
    <property type="gene ID" value="TraesKARUn01G0173100"/>
</dbReference>
<dbReference type="Gramene" id="TraesKARUn01G0174210.1">
    <property type="protein sequence ID" value="cds.TraesKARUn01G0174210.1"/>
    <property type="gene ID" value="TraesKARUn01G0174210"/>
</dbReference>
<dbReference type="Gramene" id="TraesKARUn01G0175530.1">
    <property type="protein sequence ID" value="cds.TraesKARUn01G0175530.1"/>
    <property type="gene ID" value="TraesKARUn01G0175530"/>
</dbReference>
<dbReference type="Gramene" id="TraesKARUn01G0176000.1">
    <property type="protein sequence ID" value="cds.TraesKARUn01G0176000.1"/>
    <property type="gene ID" value="TraesKARUn01G0176000"/>
</dbReference>
<dbReference type="Gramene" id="TraesKARUn01G0176460.1">
    <property type="protein sequence ID" value="cds.TraesKARUn01G0176460.1"/>
    <property type="gene ID" value="TraesKARUn01G0176460"/>
</dbReference>
<dbReference type="Gramene" id="TraesKARUn01G0178250.1">
    <property type="protein sequence ID" value="cds.TraesKARUn01G0178250.1"/>
    <property type="gene ID" value="TraesKARUn01G0178250"/>
</dbReference>
<dbReference type="Gramene" id="TraesKARUn01G0180370.1">
    <property type="protein sequence ID" value="cds.TraesKARUn01G0180370.1"/>
    <property type="gene ID" value="TraesKARUn01G0180370"/>
</dbReference>
<dbReference type="Gramene" id="TraesKARUn01G0183110.1">
    <property type="protein sequence ID" value="cds.TraesKARUn01G0183110.1"/>
    <property type="gene ID" value="TraesKARUn01G0183110"/>
</dbReference>
<dbReference type="Gramene" id="TraesKARUn01G0185350.1">
    <property type="protein sequence ID" value="cds.TraesKARUn01G0185350.1"/>
    <property type="gene ID" value="TraesKARUn01G0185350"/>
</dbReference>
<dbReference type="Gramene" id="TraesKARUn01G0185550.1">
    <property type="protein sequence ID" value="cds.TraesKARUn01G0185550.1"/>
    <property type="gene ID" value="TraesKARUn01G0185550"/>
</dbReference>
<dbReference type="Gramene" id="TraesKARUn01G0186550.1">
    <property type="protein sequence ID" value="cds.TraesKARUn01G0186550.1"/>
    <property type="gene ID" value="TraesKARUn01G0186550"/>
</dbReference>
<dbReference type="Gramene" id="TraesKARUn01G0188330.1">
    <property type="protein sequence ID" value="cds.TraesKARUn01G0188330.1"/>
    <property type="gene ID" value="TraesKARUn01G0188330"/>
</dbReference>
<dbReference type="Gramene" id="TraesKARUn01G0190930.1">
    <property type="protein sequence ID" value="cds.TraesKARUn01G0190930.1"/>
    <property type="gene ID" value="TraesKARUn01G0190930"/>
</dbReference>
<dbReference type="Gramene" id="TraesKARUn01G0193810.1">
    <property type="protein sequence ID" value="cds.TraesKARUn01G0193810.1"/>
    <property type="gene ID" value="TraesKARUn01G0193810"/>
</dbReference>
<dbReference type="Gramene" id="TraesPARA_EIv1.0_2055060.1">
    <property type="protein sequence ID" value="TraesPARA_EIv1.0_2055060.1.CDS1"/>
    <property type="gene ID" value="TraesPARA_EIv1.0_2055060"/>
</dbReference>
<dbReference type="Gramene" id="TraesPARA_EIv1.0_2645020.1">
    <property type="protein sequence ID" value="TraesPARA_EIv1.0_2645020.1.CDS1"/>
    <property type="gene ID" value="TraesPARA_EIv1.0_2645020"/>
</dbReference>
<dbReference type="Gramene" id="TraesPARA_EIv1.0_2646900.1">
    <property type="protein sequence ID" value="TraesPARA_EIv1.0_2646900.1.CDS1"/>
    <property type="gene ID" value="TraesPARA_EIv1.0_2646900"/>
</dbReference>
<dbReference type="Gramene" id="TraesPARA_EIv1.0_2648040.1">
    <property type="protein sequence ID" value="TraesPARA_EIv1.0_2648040.1.CDS1"/>
    <property type="gene ID" value="TraesPARA_EIv1.0_2648040"/>
</dbReference>
<dbReference type="Gramene" id="TraesPARA_EIv1.0_2649210.1">
    <property type="protein sequence ID" value="TraesPARA_EIv1.0_2649210.1.CDS1"/>
    <property type="gene ID" value="TraesPARA_EIv1.0_2649210"/>
</dbReference>
<dbReference type="Gramene" id="TraesPARA_EIv1.0_2650230.1">
    <property type="protein sequence ID" value="TraesPARA_EIv1.0_2650230.1.CDS1"/>
    <property type="gene ID" value="TraesPARA_EIv1.0_2650230"/>
</dbReference>
<dbReference type="Gramene" id="TraesPARA_EIv1.0_2650420.1">
    <property type="protein sequence ID" value="TraesPARA_EIv1.0_2650420.1.CDS1"/>
    <property type="gene ID" value="TraesPARA_EIv1.0_2650420"/>
</dbReference>
<dbReference type="Gramene" id="TraesPARA_EIv1.0_2650470.1">
    <property type="protein sequence ID" value="TraesPARA_EIv1.0_2650470.1.CDS1"/>
    <property type="gene ID" value="TraesPARA_EIv1.0_2650470"/>
</dbReference>
<dbReference type="Gramene" id="TraesPARA_EIv1.0_2652710.1">
    <property type="protein sequence ID" value="TraesPARA_EIv1.0_2652710.1.CDS1"/>
    <property type="gene ID" value="TraesPARA_EIv1.0_2652710"/>
</dbReference>
<dbReference type="Gramene" id="TraesPARA_EIv1.0_2652870.1">
    <property type="protein sequence ID" value="TraesPARA_EIv1.0_2652870.1.CDS1"/>
    <property type="gene ID" value="TraesPARA_EIv1.0_2652870"/>
</dbReference>
<dbReference type="Gramene" id="TraesPARA_EIv1.0_2653230.1">
    <property type="protein sequence ID" value="TraesPARA_EIv1.0_2653230.1.CDS1"/>
    <property type="gene ID" value="TraesPARA_EIv1.0_2653230"/>
</dbReference>
<dbReference type="Gramene" id="TraesPARA_EIv1.0_2653630.1">
    <property type="protein sequence ID" value="TraesPARA_EIv1.0_2653630.1.CDS1"/>
    <property type="gene ID" value="TraesPARA_EIv1.0_2653630"/>
</dbReference>
<dbReference type="Gramene" id="TraesPARA_EIv1.0_2654000.1">
    <property type="protein sequence ID" value="TraesPARA_EIv1.0_2654000.1.CDS1"/>
    <property type="gene ID" value="TraesPARA_EIv1.0_2654000"/>
</dbReference>
<dbReference type="Gramene" id="TraesPARA_EIv1.0_2655110.1">
    <property type="protein sequence ID" value="TraesPARA_EIv1.0_2655110.1.CDS1"/>
    <property type="gene ID" value="TraesPARA_EIv1.0_2655110"/>
</dbReference>
<dbReference type="Gramene" id="TraesPARA_EIv1.0_2655250.1">
    <property type="protein sequence ID" value="TraesPARA_EIv1.0_2655250.1.CDS1"/>
    <property type="gene ID" value="TraesPARA_EIv1.0_2655250"/>
</dbReference>
<dbReference type="Gramene" id="TraesPARA_EIv1.0_2655480.1">
    <property type="protein sequence ID" value="TraesPARA_EIv1.0_2655480.1.CDS1"/>
    <property type="gene ID" value="TraesPARA_EIv1.0_2655480"/>
</dbReference>
<dbReference type="Gramene" id="TraesPARA_EIv1.0_2656410.1">
    <property type="protein sequence ID" value="TraesPARA_EIv1.0_2656410.1.CDS1"/>
    <property type="gene ID" value="TraesPARA_EIv1.0_2656410"/>
</dbReference>
<dbReference type="Gramene" id="TraesPARA_EIv1.0_2656510.1">
    <property type="protein sequence ID" value="TraesPARA_EIv1.0_2656510.1.CDS1"/>
    <property type="gene ID" value="TraesPARA_EIv1.0_2656510"/>
</dbReference>
<dbReference type="Gramene" id="TraesPARA_EIv1.0_2658350.1">
    <property type="protein sequence ID" value="TraesPARA_EIv1.0_2658350.1.CDS1"/>
    <property type="gene ID" value="TraesPARA_EIv1.0_2658350"/>
</dbReference>
<dbReference type="Gramene" id="TraesPARA_EIv1.0_2660220.1">
    <property type="protein sequence ID" value="TraesPARA_EIv1.0_2660220.1.CDS1"/>
    <property type="gene ID" value="TraesPARA_EIv1.0_2660220"/>
</dbReference>
<dbReference type="Gramene" id="TraesPARA_EIv1.0_2662900.1">
    <property type="protein sequence ID" value="TraesPARA_EIv1.0_2662900.1.CDS1"/>
    <property type="gene ID" value="TraesPARA_EIv1.0_2662900"/>
</dbReference>
<dbReference type="Gramene" id="TraesPARA_EIv1.0_2663150.1">
    <property type="protein sequence ID" value="TraesPARA_EIv1.0_2663150.1.CDS1"/>
    <property type="gene ID" value="TraesPARA_EIv1.0_2663150"/>
</dbReference>
<dbReference type="Gramene" id="TraesPARA_EIv1.0_2663330.1">
    <property type="protein sequence ID" value="TraesPARA_EIv1.0_2663330.1.CDS1"/>
    <property type="gene ID" value="TraesPARA_EIv1.0_2663330"/>
</dbReference>
<dbReference type="Gramene" id="TraesPARA_EIv1.0_2663420.1">
    <property type="protein sequence ID" value="TraesPARA_EIv1.0_2663420.1.CDS1"/>
    <property type="gene ID" value="TraesPARA_EIv1.0_2663420"/>
</dbReference>
<dbReference type="Gramene" id="TraesPARA_EIv1.0_2664530.1">
    <property type="protein sequence ID" value="TraesPARA_EIv1.0_2664530.1.CDS1"/>
    <property type="gene ID" value="TraesPARA_EIv1.0_2664530"/>
</dbReference>
<dbReference type="Gramene" id="TraesPARA_EIv1.0_2666970.1">
    <property type="protein sequence ID" value="TraesPARA_EIv1.0_2666970.1.CDS1"/>
    <property type="gene ID" value="TraesPARA_EIv1.0_2666970"/>
</dbReference>
<dbReference type="Gramene" id="TraesPARA_EIv1.0_2669250.1">
    <property type="protein sequence ID" value="TraesPARA_EIv1.0_2669250.1.CDS1"/>
    <property type="gene ID" value="TraesPARA_EIv1.0_2669250"/>
</dbReference>
<dbReference type="Gramene" id="TraesPARA_EIv1.0_2670290.1">
    <property type="protein sequence ID" value="TraesPARA_EIv1.0_2670290.1.CDS1"/>
    <property type="gene ID" value="TraesPARA_EIv1.0_2670290"/>
</dbReference>
<dbReference type="Gramene" id="TraesPARA_EIv1.0_2670960.1">
    <property type="protein sequence ID" value="TraesPARA_EIv1.0_2670960.1.CDS1"/>
    <property type="gene ID" value="TraesPARA_EIv1.0_2670960"/>
</dbReference>
<dbReference type="Gramene" id="TraesPARA_EIv1.0_2675900.1">
    <property type="protein sequence ID" value="TraesPARA_EIv1.0_2675900.1.CDS1"/>
    <property type="gene ID" value="TraesPARA_EIv1.0_2675900"/>
</dbReference>
<dbReference type="Gramene" id="TraesPARA_EIv1.0_2680130.1">
    <property type="protein sequence ID" value="TraesPARA_EIv1.0_2680130.1.CDS1"/>
    <property type="gene ID" value="TraesPARA_EIv1.0_2680130"/>
</dbReference>
<dbReference type="Gramene" id="TraesPARA_EIv1.0_2681160.1">
    <property type="protein sequence ID" value="TraesPARA_EIv1.0_2681160.1.CDS1"/>
    <property type="gene ID" value="TraesPARA_EIv1.0_2681160"/>
</dbReference>
<dbReference type="Gramene" id="TraesRN3B0100434800.1">
    <property type="protein sequence ID" value="TraesRN3B0100434800.1"/>
    <property type="gene ID" value="TraesRN3B0100434800"/>
</dbReference>
<dbReference type="Gramene" id="TraesRN3B0100434900.1">
    <property type="protein sequence ID" value="TraesRN3B0100434900.1"/>
    <property type="gene ID" value="TraesRN3B0100434900"/>
</dbReference>
<dbReference type="Gramene" id="TraesRN5D0100016200.1">
    <property type="protein sequence ID" value="TraesRN5D0100016200.1"/>
    <property type="gene ID" value="TraesRN5D0100016200"/>
</dbReference>
<dbReference type="KEGG" id="taes:803163"/>
<dbReference type="eggNOG" id="ENOG502QRYE">
    <property type="taxonomic scope" value="Eukaryota"/>
</dbReference>
<dbReference type="HOGENOM" id="CLU_016126_1_0_1"/>
<dbReference type="OrthoDB" id="1871948at2759"/>
<dbReference type="Proteomes" id="UP000019116">
    <property type="component" value="Chloroplast"/>
</dbReference>
<dbReference type="ExpressionAtlas" id="P58311">
    <property type="expression patterns" value="differential"/>
</dbReference>
<dbReference type="GO" id="GO:0009535">
    <property type="term" value="C:chloroplast thylakoid membrane"/>
    <property type="evidence" value="ECO:0007669"/>
    <property type="project" value="UniProtKB-SubCell"/>
</dbReference>
<dbReference type="GO" id="GO:0009522">
    <property type="term" value="C:photosystem I"/>
    <property type="evidence" value="ECO:0007669"/>
    <property type="project" value="UniProtKB-KW"/>
</dbReference>
<dbReference type="GO" id="GO:0051539">
    <property type="term" value="F:4 iron, 4 sulfur cluster binding"/>
    <property type="evidence" value="ECO:0007669"/>
    <property type="project" value="UniProtKB-KW"/>
</dbReference>
<dbReference type="GO" id="GO:0016168">
    <property type="term" value="F:chlorophyll binding"/>
    <property type="evidence" value="ECO:0007669"/>
    <property type="project" value="UniProtKB-KW"/>
</dbReference>
<dbReference type="GO" id="GO:0009055">
    <property type="term" value="F:electron transfer activity"/>
    <property type="evidence" value="ECO:0007669"/>
    <property type="project" value="UniProtKB-UniRule"/>
</dbReference>
<dbReference type="GO" id="GO:0000287">
    <property type="term" value="F:magnesium ion binding"/>
    <property type="evidence" value="ECO:0007669"/>
    <property type="project" value="UniProtKB-UniRule"/>
</dbReference>
<dbReference type="GO" id="GO:0016491">
    <property type="term" value="F:oxidoreductase activity"/>
    <property type="evidence" value="ECO:0007669"/>
    <property type="project" value="UniProtKB-KW"/>
</dbReference>
<dbReference type="GO" id="GO:0015979">
    <property type="term" value="P:photosynthesis"/>
    <property type="evidence" value="ECO:0007669"/>
    <property type="project" value="UniProtKB-UniRule"/>
</dbReference>
<dbReference type="FunFam" id="1.20.1130.10:FF:000001">
    <property type="entry name" value="Photosystem I P700 chlorophyll a apoprotein A2"/>
    <property type="match status" value="1"/>
</dbReference>
<dbReference type="Gene3D" id="1.20.1130.10">
    <property type="entry name" value="Photosystem I PsaA/PsaB"/>
    <property type="match status" value="1"/>
</dbReference>
<dbReference type="HAMAP" id="MF_00458">
    <property type="entry name" value="PSI_PsaA"/>
    <property type="match status" value="1"/>
</dbReference>
<dbReference type="InterPro" id="IPR006243">
    <property type="entry name" value="PSI_PsaA"/>
</dbReference>
<dbReference type="InterPro" id="IPR001280">
    <property type="entry name" value="PSI_PsaA/B"/>
</dbReference>
<dbReference type="InterPro" id="IPR020586">
    <property type="entry name" value="PSI_PsaA/B_CS"/>
</dbReference>
<dbReference type="InterPro" id="IPR036408">
    <property type="entry name" value="PSI_PsaA/B_sf"/>
</dbReference>
<dbReference type="NCBIfam" id="TIGR01335">
    <property type="entry name" value="psaA"/>
    <property type="match status" value="1"/>
</dbReference>
<dbReference type="PANTHER" id="PTHR30128">
    <property type="entry name" value="OUTER MEMBRANE PROTEIN, OMPA-RELATED"/>
    <property type="match status" value="1"/>
</dbReference>
<dbReference type="PANTHER" id="PTHR30128:SF19">
    <property type="entry name" value="PHOTOSYSTEM I P700 CHLOROPHYLL A APOPROTEIN A1-RELATED"/>
    <property type="match status" value="1"/>
</dbReference>
<dbReference type="Pfam" id="PF00223">
    <property type="entry name" value="PsaA_PsaB"/>
    <property type="match status" value="1"/>
</dbReference>
<dbReference type="PIRSF" id="PIRSF002905">
    <property type="entry name" value="PSI_A"/>
    <property type="match status" value="1"/>
</dbReference>
<dbReference type="PRINTS" id="PR00257">
    <property type="entry name" value="PHOTSYSPSAAB"/>
</dbReference>
<dbReference type="SUPFAM" id="SSF81558">
    <property type="entry name" value="Photosystem I subunits PsaA/PsaB"/>
    <property type="match status" value="1"/>
</dbReference>
<dbReference type="PROSITE" id="PS00419">
    <property type="entry name" value="PHOTOSYSTEM_I_PSAAB"/>
    <property type="match status" value="1"/>
</dbReference>